<sequence length="426" mass="46021">MANDSGGPGGPSPSERDRQYCELCGKMENLLRCSRCRSSFYCCKEHQRQDWKKHKLVCQGSEGALGHGVGPHQHSGPAPPAAVPPPRAGAREPRKAAARRDNASGDAAKGKVKAKPPADPAAAASPCRAAAGGQGSAVAAEAEPGKEEPPARSSLFQEKANLYPPSNTPGDALSPGGGLRPNGQTKPLPALKLALEYIVPCMNKHGICVVDDFLGKETGQQIGDEVRALHDTGKFTDGQLVSQKSDSSKDIRGDKITWIEGKEPGCETIGLLMSSMDDLIRHCNGKLGSYKINGRTKAMVACYPGNGTGYVRHVDNPNGDGRCVTCIYYLNKDWDAKVSGGILRIFPEGKAQFADIEPKFDRLLFFWSDRRNPHEVQPAYATRYAITVWYFDADERARAKVKYLTGEKGVRVELNKPSDSVGKDVF</sequence>
<comment type="function">
    <text evidence="5 7 8 12 18 25 29">Cellular oxygen sensor that catalyzes, under normoxic conditions, the post-translational formation of 4-hydroxyproline in hypoxia-inducible factor (HIF) alpha proteins. Hydroxylates a specific proline found in each of the oxygen-dependent degradation (ODD) domains (N-terminal, NODD, and C-terminal, CODD) of HIF1A. Also hydroxylates HIF2A. Has a preference for the CODD site for both HIF1A and HIF1B. Hydroxylated HIFs are then targeted for proteasomal degradation via the von Hippel-Lindau ubiquitination complex. Under hypoxic conditions, the hydroxylation reaction is attenuated allowing HIFs to escape degradation resulting in their translocation to the nucleus, heterodimerization with HIF1B, and increased expression of hypoxy-inducible genes. EGLN1 is the most important isozyme under normoxia and, through regulating the stability of HIF1, involved in various hypoxia-influenced processes such as angiogenesis in retinal and cardiac functionality. Target proteins are preferentially recognized via a LXXLAP motif.</text>
</comment>
<comment type="catalytic activity">
    <reaction evidence="29">
        <text>L-prolyl-[hypoxia-inducible factor alpha subunit] + 2-oxoglutarate + O2 = trans-4-hydroxy-L-prolyl-[hypoxia-inducible factor alpha subunit] + succinate + CO2</text>
        <dbReference type="Rhea" id="RHEA:48400"/>
        <dbReference type="Rhea" id="RHEA-COMP:12093"/>
        <dbReference type="Rhea" id="RHEA-COMP:12094"/>
        <dbReference type="ChEBI" id="CHEBI:15379"/>
        <dbReference type="ChEBI" id="CHEBI:16526"/>
        <dbReference type="ChEBI" id="CHEBI:16810"/>
        <dbReference type="ChEBI" id="CHEBI:30031"/>
        <dbReference type="ChEBI" id="CHEBI:50342"/>
        <dbReference type="ChEBI" id="CHEBI:61965"/>
        <dbReference type="EC" id="1.14.11.29"/>
    </reaction>
</comment>
<comment type="cofactor">
    <cofactor evidence="2 14 19 31 37 42 43">
        <name>Fe(2+)</name>
        <dbReference type="ChEBI" id="CHEBI:29033"/>
    </cofactor>
    <text evidence="2 14 19 31 37 42 43">Binds 1 Fe(2+) ion per subunit.</text>
</comment>
<comment type="cofactor">
    <cofactor evidence="19">
        <name>L-ascorbate</name>
        <dbReference type="ChEBI" id="CHEBI:38290"/>
    </cofactor>
</comment>
<comment type="activity regulation">
    <text evidence="10 23">Following exposure to hypoxia, activated in HeLa cells but not in cardiovascular cells.</text>
</comment>
<comment type="biophysicochemical properties">
    <kinetics>
        <KM evidence="29">70 nM for HIF2A</KM>
        <KM evidence="29">150 uM for O(2)</KM>
        <KM evidence="29">1.3 uM for 2-oxoglutarate</KM>
    </kinetics>
</comment>
<comment type="subunit">
    <text evidence="12 14 17 19 24 26 27 30">Monomer. Interacts with ING4; the interaction inhibits the hydroxylation of HIF alpha proteins. Interacts with PTGES3 (via PXLE motif); thereby recruiting EGLN1 to the HSP90 pathway to facilitate HIF alpha proteins hydroxylation. Interacts with LIMD1. Found in a complex composed of LIMD1, VHL, EGLN1/PHD2, ELOB and CUL2. Interacts with EPAS1. Interacts with CBFA2T3 (PubMed:25974097). Interacts with HIF1A (PubMed:25974097).</text>
</comment>
<comment type="interaction">
    <interactant intactId="EBI-1174818">
        <id>Q9GZT9</id>
    </interactant>
    <interactant intactId="EBI-447470">
        <id>Q99814</id>
        <label>EPAS1</label>
    </interactant>
    <organismsDiffer>false</organismsDiffer>
    <experiments>3</experiments>
</comment>
<comment type="interaction">
    <interactant intactId="EBI-1174818">
        <id>Q9GZT9</id>
    </interactant>
    <interactant intactId="EBI-724839">
        <id>Q14318</id>
        <label>FKBP8</label>
    </interactant>
    <organismsDiffer>false</organismsDiffer>
    <experiments>6</experiments>
</comment>
<comment type="interaction">
    <interactant intactId="EBI-1174818">
        <id>Q9GZT9</id>
    </interactant>
    <interactant intactId="EBI-447269">
        <id>Q16665</id>
        <label>HIF1A</label>
    </interactant>
    <organismsDiffer>false</organismsDiffer>
    <experiments>4</experiments>
</comment>
<comment type="interaction">
    <interactant intactId="EBI-1174818">
        <id>Q9GZT9</id>
    </interactant>
    <interactant intactId="EBI-725454">
        <id>Q13438</id>
        <label>OS9</label>
    </interactant>
    <organismsDiffer>false</organismsDiffer>
    <experiments>4</experiments>
</comment>
<comment type="interaction">
    <interactant intactId="EBI-1174818">
        <id>Q9GZT9</id>
    </interactant>
    <interactant intactId="EBI-6863748">
        <id>PRO_0000037551</id>
        <dbReference type="UniProtKB" id="Q9WMX2"/>
    </interactant>
    <organismsDiffer>true</organismsDiffer>
    <experiments>3</experiments>
</comment>
<comment type="subcellular location">
    <subcellularLocation>
        <location evidence="9 18 20">Cytoplasm</location>
    </subcellularLocation>
    <subcellularLocation>
        <location evidence="9 18 20">Nucleus</location>
    </subcellularLocation>
    <text evidence="18 20">Mainly cytoplasmic. Shuttles between the nucleus and cytoplasm (PubMed:19631610). Nuclear export requires functional XPO1.</text>
</comment>
<comment type="alternative products">
    <event type="alternative splicing"/>
    <isoform>
        <id>Q9GZT9-1</id>
        <name>1</name>
        <sequence type="displayed"/>
    </isoform>
    <isoform>
        <id>Q9GZT9-2</id>
        <name>2</name>
        <sequence type="described" ref="VSP_007569"/>
    </isoform>
    <isoform>
        <id>Q9GZT9-3</id>
        <name>3</name>
        <sequence type="described" ref="VSP_042191"/>
    </isoform>
</comment>
<comment type="tissue specificity">
    <text evidence="4 6 8 10 11">According to PubMed:11056053, widely expressed with highest levels in skeletal muscle and heart, moderate levels in pancreas, brain (dopaminergic neurons of adult and fetal substantia nigra) and kidney, and lower levels in lung and liver. According to PubMed:12351678 widely expressed with highest levels in brain, kidney and adrenal gland. Expressed in cardiac myocytes, aortic endothelial cells and coronary artery smooth muscle. According to PubMed:12788921; expressed in adult and fetal heart, brain, liver, lung, skeletal muscle and kidney. Also expressed in placenta. Highest levels in adult heart, brain, lung and liver and fetal brain, heart spleen and skeletal muscle.</text>
</comment>
<comment type="domain">
    <text evidence="16">The beta(2)beta(3) 'finger-like' loop domain is important for substrate (HIFs' CODD/NODD) selectivity.</text>
</comment>
<comment type="PTM">
    <text evidence="24">S-nitrosylation inhibits the enzyme activity up to 60% under aerobic conditions. Chelation of Fe(2+) has no effect on the S-nitrosylation. It is uncertain whether nitrosylation occurs on Cys-323 or Cys-326.</text>
</comment>
<comment type="polymorphism">
    <text evidence="21 22 28 29 34">Variations in EGLN1 are associated with adaptation to high altitude (PubMed:20466884, PubMed:20838600, PubMed:24711448, PubMed:25129147). High-altitude hypoxia (reduced inspired oxygen tension due to decreased barometric pressure) exerts severe physiological stress on the human body and leads to an elevation of hematocrit levels and an increased number of erythrocytes (polycythemia) in non-adapted individuals. Genetic variations in EGLN1 contribute to adaptation to high altitute by maintaining hematocrit levels comparable to those for populations living at sea level and are present in two high-altitude regions where humans have lived for millennia, the Andean Altiplano and the Tibetan Plateau (PubMed:20466884, PubMed:20838600). Variants Glu-4 and Ser-127, which are frequently associated together and are present in the majority of Tibetan populations, participate in adaptation to high altitude (PubMed:24711448, PubMed:25129147). Molecular mechanisms explaining this adaptation are however unclear. According to a report, variants Glu-4 and Ser-127 lead to decreased interaction with PTGES3 and subsequent decrease of HIF alpha proteins degradation (PubMed:24711448). According to a second report, Glu-4 and Ser-127 haplotype enhances the catalytic activity under hypoxic conditions, promoting increased HIF alpha proteins degradation, thereby abrogating hypoxia-induced and HIF alpha-mediated augmentation of erythropoiesis and protecting Tibetans from polycythemia at high altitude (PubMed:25129147).</text>
</comment>
<comment type="disease" evidence="13 15">
    <disease id="DI-00481">
        <name>Erythrocytosis, familial, 3</name>
        <acronym>ECYT3</acronym>
        <description>An autosomal dominant disorder characterized by elevated serum hemoglobin and hematocrit, and normal serum erythropoietin levels.</description>
        <dbReference type="MIM" id="609820"/>
    </disease>
    <text>The disease is caused by variants affecting the gene represented in this entry.</text>
</comment>
<comment type="miscellaneous">
    <molecule>Isoform 2</molecule>
    <text evidence="34">Inactive isoform.</text>
</comment>
<comment type="caution">
    <text evidence="34">It was previously reported that this protein was the ortholog of rat SM-20. However, EGLN3 is now considered the true ortholog of rat SM-20 since it shows substantially greater similarity.</text>
</comment>
<comment type="sequence caution" evidence="34">
    <conflict type="erroneous initiation">
        <sequence resource="EMBL-CDS" id="AAK07534"/>
    </conflict>
    <text>Truncated N-terminus.</text>
</comment>
<comment type="sequence caution" evidence="34">
    <conflict type="frameshift">
        <sequence resource="EMBL-CDS" id="AAK07536"/>
    </conflict>
</comment>
<comment type="online information" name="Atlas of Genetics and Cytogenetics in Oncology and Haematology">
    <link uri="https://atlasgeneticsoncology.org/gene/44140/EGLN1"/>
</comment>
<reference key="1">
    <citation type="journal article" date="2000" name="Genomics">
        <title>Mapping, characterization, and expression analysis of the SM-20 human homologue, C1orf12, and identification of a novel related gene, SCAND2.</title>
        <authorList>
            <person name="Dupuy D."/>
            <person name="Aubert I."/>
            <person name="Duperat V.G."/>
            <person name="Petit J."/>
            <person name="Taine L."/>
            <person name="Stef M."/>
            <person name="Bloch B."/>
            <person name="Arveiler B."/>
        </authorList>
    </citation>
    <scope>NUCLEOTIDE SEQUENCE [GENOMIC DNA / MRNA] (ISOFORM 1)</scope>
    <scope>TISSUE SPECIFICITY</scope>
</reference>
<reference key="2">
    <citation type="journal article" date="2001" name="Gene">
        <title>Characterization and comparative analysis of the EGLN gene family.</title>
        <authorList>
            <person name="Taylor M.S."/>
        </authorList>
    </citation>
    <scope>NUCLEOTIDE SEQUENCE (ISOFORM 1)</scope>
</reference>
<reference key="3">
    <citation type="journal article" date="2003" name="J. Biol. Chem.">
        <title>Characterization of the human prolyl 4-hydroxylases that modify the hypoxia-inducible factor.</title>
        <authorList>
            <person name="Hirsila M."/>
            <person name="Koivunen P."/>
            <person name="Gunzler V."/>
            <person name="Kivirikko K.I."/>
            <person name="Myllyharju J."/>
        </authorList>
    </citation>
    <scope>NUCLEOTIDE SEQUENCE [MRNA] (ISOFORM 3)</scope>
    <scope>TISSUE SPECIFICITY</scope>
    <scope>SUBSTRATE SPECIFICITY</scope>
    <source>
        <tissue>Aorta</tissue>
        <tissue>Colon</tissue>
        <tissue>Lung</tissue>
    </source>
</reference>
<reference key="4">
    <citation type="journal article" date="2007" name="BMC Genomics">
        <title>The full-ORF clone resource of the German cDNA consortium.</title>
        <authorList>
            <person name="Bechtel S."/>
            <person name="Rosenfelder H."/>
            <person name="Duda A."/>
            <person name="Schmidt C.P."/>
            <person name="Ernst U."/>
            <person name="Wellenreuther R."/>
            <person name="Mehrle A."/>
            <person name="Schuster C."/>
            <person name="Bahr A."/>
            <person name="Bloecker H."/>
            <person name="Heubner D."/>
            <person name="Hoerlein A."/>
            <person name="Michel G."/>
            <person name="Wedler H."/>
            <person name="Koehrer K."/>
            <person name="Ottenwaelder B."/>
            <person name="Poustka A."/>
            <person name="Wiemann S."/>
            <person name="Schupp I."/>
        </authorList>
    </citation>
    <scope>NUCLEOTIDE SEQUENCE [LARGE SCALE MRNA] OF 160-426 (ISOFORM 1)</scope>
    <source>
        <tissue>Amygdala</tissue>
    </source>
</reference>
<reference key="5">
    <citation type="journal article" date="2006" name="Nature">
        <title>The DNA sequence and biological annotation of human chromosome 1.</title>
        <authorList>
            <person name="Gregory S.G."/>
            <person name="Barlow K.F."/>
            <person name="McLay K.E."/>
            <person name="Kaul R."/>
            <person name="Swarbreck D."/>
            <person name="Dunham A."/>
            <person name="Scott C.E."/>
            <person name="Howe K.L."/>
            <person name="Woodfine K."/>
            <person name="Spencer C.C.A."/>
            <person name="Jones M.C."/>
            <person name="Gillson C."/>
            <person name="Searle S."/>
            <person name="Zhou Y."/>
            <person name="Kokocinski F."/>
            <person name="McDonald L."/>
            <person name="Evans R."/>
            <person name="Phillips K."/>
            <person name="Atkinson A."/>
            <person name="Cooper R."/>
            <person name="Jones C."/>
            <person name="Hall R.E."/>
            <person name="Andrews T.D."/>
            <person name="Lloyd C."/>
            <person name="Ainscough R."/>
            <person name="Almeida J.P."/>
            <person name="Ambrose K.D."/>
            <person name="Anderson F."/>
            <person name="Andrew R.W."/>
            <person name="Ashwell R.I.S."/>
            <person name="Aubin K."/>
            <person name="Babbage A.K."/>
            <person name="Bagguley C.L."/>
            <person name="Bailey J."/>
            <person name="Beasley H."/>
            <person name="Bethel G."/>
            <person name="Bird C.P."/>
            <person name="Bray-Allen S."/>
            <person name="Brown J.Y."/>
            <person name="Brown A.J."/>
            <person name="Buckley D."/>
            <person name="Burton J."/>
            <person name="Bye J."/>
            <person name="Carder C."/>
            <person name="Chapman J.C."/>
            <person name="Clark S.Y."/>
            <person name="Clarke G."/>
            <person name="Clee C."/>
            <person name="Cobley V."/>
            <person name="Collier R.E."/>
            <person name="Corby N."/>
            <person name="Coville G.J."/>
            <person name="Davies J."/>
            <person name="Deadman R."/>
            <person name="Dunn M."/>
            <person name="Earthrowl M."/>
            <person name="Ellington A.G."/>
            <person name="Errington H."/>
            <person name="Frankish A."/>
            <person name="Frankland J."/>
            <person name="French L."/>
            <person name="Garner P."/>
            <person name="Garnett J."/>
            <person name="Gay L."/>
            <person name="Ghori M.R.J."/>
            <person name="Gibson R."/>
            <person name="Gilby L.M."/>
            <person name="Gillett W."/>
            <person name="Glithero R.J."/>
            <person name="Grafham D.V."/>
            <person name="Griffiths C."/>
            <person name="Griffiths-Jones S."/>
            <person name="Grocock R."/>
            <person name="Hammond S."/>
            <person name="Harrison E.S.I."/>
            <person name="Hart E."/>
            <person name="Haugen E."/>
            <person name="Heath P.D."/>
            <person name="Holmes S."/>
            <person name="Holt K."/>
            <person name="Howden P.J."/>
            <person name="Hunt A.R."/>
            <person name="Hunt S.E."/>
            <person name="Hunter G."/>
            <person name="Isherwood J."/>
            <person name="James R."/>
            <person name="Johnson C."/>
            <person name="Johnson D."/>
            <person name="Joy A."/>
            <person name="Kay M."/>
            <person name="Kershaw J.K."/>
            <person name="Kibukawa M."/>
            <person name="Kimberley A.M."/>
            <person name="King A."/>
            <person name="Knights A.J."/>
            <person name="Lad H."/>
            <person name="Laird G."/>
            <person name="Lawlor S."/>
            <person name="Leongamornlert D.A."/>
            <person name="Lloyd D.M."/>
            <person name="Loveland J."/>
            <person name="Lovell J."/>
            <person name="Lush M.J."/>
            <person name="Lyne R."/>
            <person name="Martin S."/>
            <person name="Mashreghi-Mohammadi M."/>
            <person name="Matthews L."/>
            <person name="Matthews N.S.W."/>
            <person name="McLaren S."/>
            <person name="Milne S."/>
            <person name="Mistry S."/>
            <person name="Moore M.J.F."/>
            <person name="Nickerson T."/>
            <person name="O'Dell C.N."/>
            <person name="Oliver K."/>
            <person name="Palmeiri A."/>
            <person name="Palmer S.A."/>
            <person name="Parker A."/>
            <person name="Patel D."/>
            <person name="Pearce A.V."/>
            <person name="Peck A.I."/>
            <person name="Pelan S."/>
            <person name="Phelps K."/>
            <person name="Phillimore B.J."/>
            <person name="Plumb R."/>
            <person name="Rajan J."/>
            <person name="Raymond C."/>
            <person name="Rouse G."/>
            <person name="Saenphimmachak C."/>
            <person name="Sehra H.K."/>
            <person name="Sheridan E."/>
            <person name="Shownkeen R."/>
            <person name="Sims S."/>
            <person name="Skuce C.D."/>
            <person name="Smith M."/>
            <person name="Steward C."/>
            <person name="Subramanian S."/>
            <person name="Sycamore N."/>
            <person name="Tracey A."/>
            <person name="Tromans A."/>
            <person name="Van Helmond Z."/>
            <person name="Wall M."/>
            <person name="Wallis J.M."/>
            <person name="White S."/>
            <person name="Whitehead S.L."/>
            <person name="Wilkinson J.E."/>
            <person name="Willey D.L."/>
            <person name="Williams H."/>
            <person name="Wilming L."/>
            <person name="Wray P.W."/>
            <person name="Wu Z."/>
            <person name="Coulson A."/>
            <person name="Vaudin M."/>
            <person name="Sulston J.E."/>
            <person name="Durbin R.M."/>
            <person name="Hubbard T."/>
            <person name="Wooster R."/>
            <person name="Dunham I."/>
            <person name="Carter N.P."/>
            <person name="McVean G."/>
            <person name="Ross M.T."/>
            <person name="Harrow J."/>
            <person name="Olson M.V."/>
            <person name="Beck S."/>
            <person name="Rogers J."/>
            <person name="Bentley D.R."/>
        </authorList>
    </citation>
    <scope>NUCLEOTIDE SEQUENCE [LARGE SCALE GENOMIC DNA]</scope>
</reference>
<reference key="6">
    <citation type="submission" date="2000-06" db="EMBL/GenBank/DDBJ databases">
        <title>Human acute promyelocytic leukemia cell line NB4's apoptosis related genes.</title>
        <authorList>
            <person name="Yu W.-Q."/>
            <person name="Sun B.-Z."/>
            <person name="Chai Y.-B."/>
            <person name="Zhu F."/>
            <person name="Liu X.-S."/>
            <person name="Li Z."/>
            <person name="Lu F."/>
            <person name="Yan W."/>
            <person name="Yang H."/>
            <person name="Zhao Z.-L."/>
        </authorList>
    </citation>
    <scope>NUCLEOTIDE SEQUENCE [LARGE SCALE MRNA] OF 136-426 (ISOFORM 2)</scope>
    <source>
        <tissue>Promyelocytic leukemia</tissue>
    </source>
</reference>
<reference key="7">
    <citation type="journal article" date="2001" name="Cell">
        <title>HIF-1, O(2), and the 3 PHDs: how animal cells signal hypoxia to the nucleus.</title>
        <authorList>
            <person name="Semenza G.L."/>
        </authorList>
    </citation>
    <scope>REVIEW</scope>
</reference>
<reference key="8">
    <citation type="journal article" date="2001" name="Cell">
        <title>C. elegans EGL-9 and mammalian homologs define a family of dioxygenases that regulate HIF by prolyl hydroxylation.</title>
        <authorList>
            <person name="Epstein A.C.R."/>
            <person name="Gleadle J.M."/>
            <person name="McNeill L.A."/>
            <person name="Hewitson K.S."/>
            <person name="O'Rourke J."/>
            <person name="Mole D.R."/>
            <person name="Mukherji M."/>
            <person name="Metzen E."/>
            <person name="Wilson M.I."/>
            <person name="Dhanda A."/>
            <person name="Tian Y.M."/>
            <person name="Masson N."/>
            <person name="Hamilton D.L."/>
            <person name="Jaakkola P."/>
            <person name="Barstead R."/>
            <person name="Hodgkin J."/>
            <person name="Maxwell P.H."/>
            <person name="Pugh C.W."/>
            <person name="Schofield C.J."/>
            <person name="Ratcliffe P.J."/>
        </authorList>
    </citation>
    <scope>FUNCTION</scope>
</reference>
<reference key="9">
    <citation type="journal article" date="2002" name="J. Biol. Chem.">
        <title>Sequence determinants in hypoxia-inducible factor-1alpha for hydroxylation by the prolyl hydroxylases PHD1, PHD2, and PHD3.</title>
        <authorList>
            <person name="Huang J."/>
            <person name="Zhao Q."/>
            <person name="Mooney S.M."/>
            <person name="Lee F.S."/>
        </authorList>
    </citation>
    <scope>FUNCTION</scope>
    <scope>SUBSTRATE RECOGNITION MOTIF</scope>
</reference>
<reference key="10">
    <citation type="journal article" date="2002" name="Proc. Natl. Acad. Sci. U.S.A.">
        <title>Biochemical purification and pharmacological inhibition of a mammalian prolyl hydroxylase acting on hypoxia-inducible factor.</title>
        <authorList>
            <person name="Ivan M."/>
            <person name="Haberberger T."/>
            <person name="Gervasi D.C."/>
            <person name="Michelson K.S."/>
            <person name="Guenzler V."/>
            <person name="Kondo K."/>
            <person name="Yang H."/>
            <person name="Sorokina I."/>
            <person name="Conaway R.C."/>
            <person name="Conaway J.W."/>
            <person name="Kaelin W.G. Jr."/>
        </authorList>
    </citation>
    <scope>FUNCTION</scope>
</reference>
<reference key="11">
    <citation type="journal article" date="2002" name="Biochem. Biophys. Res. Commun.">
        <title>Overexpression of PH-4, a novel putative proline 4-hydroxylase, modulates activity of hypoxia-inducible transcription factors.</title>
        <authorList>
            <person name="Oehme F."/>
            <person name="Ellinghaus P."/>
            <person name="Kolkhof P."/>
            <person name="Smith T.J."/>
            <person name="Ramakrishnan S."/>
            <person name="Huetter J."/>
            <person name="Schramm M."/>
            <person name="Flamme I."/>
        </authorList>
    </citation>
    <scope>TISSUE SPECIFICITY</scope>
</reference>
<reference key="12">
    <citation type="journal article" date="2003" name="Biochem. Biophys. Res. Commun.">
        <title>Differential regulation of HIF-1alpha prolyl-4-hydroxylase genes by hypoxia in human cardiovascular cells.</title>
        <authorList>
            <person name="Cioffi C.L."/>
            <person name="Qin Liu X."/>
            <person name="Kosinski P.A."/>
            <person name="Garay M."/>
            <person name="Bowen B.R."/>
        </authorList>
    </citation>
    <scope>TISSUE SPECIFICITY</scope>
    <scope>ACTIVITY REGULATION</scope>
</reference>
<reference key="13">
    <citation type="journal article" date="2003" name="J. Cell Sci.">
        <title>Intracellular localisation of human HIF-1 alpha hydroxylases: implications for oxygen sensing.</title>
        <authorList>
            <person name="Metzen E."/>
            <person name="Berchner-Pfannschmidt U."/>
            <person name="Stengel P."/>
            <person name="Marxsen J.H."/>
            <person name="Stolze I."/>
            <person name="Klinger M."/>
            <person name="Huang W.Q."/>
            <person name="Wotzlaw C."/>
            <person name="Hellwig-Burgel T."/>
            <person name="Jelkmann W."/>
            <person name="Acker H."/>
            <person name="Fandrey J."/>
        </authorList>
    </citation>
    <scope>SUBCELLULAR LOCATION</scope>
    <scope>INDUCTION</scope>
</reference>
<reference key="14">
    <citation type="journal article" date="2004" name="J. Biol. Chem.">
        <title>Differential function of the prolyl hydroxylases PHD1, PHD2, and PHD3 in the regulation of hypoxia-inducible factor.</title>
        <authorList>
            <person name="Appelhoff R.J."/>
            <person name="Tian Y.M."/>
            <person name="Raval R.R."/>
            <person name="Turley H."/>
            <person name="Harris A.L."/>
            <person name="Pugh C.W."/>
            <person name="Ratcliffe P.J."/>
            <person name="Gleadle J.M."/>
        </authorList>
    </citation>
    <scope>INDUCTION</scope>
    <scope>SUBSTRATE SPECIFICITY</scope>
</reference>
<reference key="15">
    <citation type="journal article" date="2005" name="Proc. Natl. Acad. Sci. U.S.A.">
        <title>The candidate tumor suppressor ING4 represses activation of the hypoxia inducible factor (HIF).</title>
        <authorList>
            <person name="Ozer A."/>
            <person name="Wu L.C."/>
            <person name="Bruick R.K."/>
        </authorList>
    </citation>
    <scope>INTERACTION WITH ING4</scope>
    <scope>FUNCTION</scope>
</reference>
<reference key="16">
    <citation type="journal article" date="2008" name="J. Biol. Chem.">
        <title>Kinetic rationale for selectivity toward N- and C-terminal oxygen-dependent degradation domain substrates mediated by a loop region of hypoxia-inducible factor prolyl hydroxylases.</title>
        <authorList>
            <person name="Flashman E."/>
            <person name="Bagg E.A."/>
            <person name="Chowdhury R."/>
            <person name="Mecinovic J."/>
            <person name="Loenarz C."/>
            <person name="McDonough M.A."/>
            <person name="Hewitson K.S."/>
            <person name="Schofield C.J."/>
        </authorList>
    </citation>
    <scope>SUBSTRATE SPECIFICITY</scope>
    <scope>IDENTIFICATION BY MASS SPECTROMETRY</scope>
    <scope>MUTAGENESIS OF 237-ASP--ILE-251</scope>
    <scope>DOMAIN</scope>
</reference>
<reference key="17">
    <citation type="journal article" date="2009" name="Anal. Chem.">
        <title>Lys-N and trypsin cover complementary parts of the phosphoproteome in a refined SCX-based approach.</title>
        <authorList>
            <person name="Gauci S."/>
            <person name="Helbig A.O."/>
            <person name="Slijper M."/>
            <person name="Krijgsveld J."/>
            <person name="Heck A.J."/>
            <person name="Mohammed S."/>
        </authorList>
    </citation>
    <scope>ACETYLATION [LARGE SCALE ANALYSIS] AT ALA-2</scope>
    <scope>CLEAVAGE OF INITIATOR METHIONINE [LARGE SCALE ANALYSIS]</scope>
    <scope>IDENTIFICATION BY MASS SPECTROMETRY [LARGE SCALE ANALYSIS]</scope>
</reference>
<reference key="18">
    <citation type="journal article" date="2009" name="Biochem. Biophys. Res. Commun.">
        <title>Cellular oxygen sensing: Importins and exportins are mediators of intracellular localisation of prolyl-4-hydroxylases PHD1 and PHD2.</title>
        <authorList>
            <person name="Steinhoff A."/>
            <person name="Pientka F.K."/>
            <person name="Mockel S."/>
            <person name="Kettelhake A."/>
            <person name="Hartmann E."/>
            <person name="Kohler M."/>
            <person name="Depping R."/>
        </authorList>
    </citation>
    <scope>SUBCELLULAR LOCATION</scope>
</reference>
<reference key="19">
    <citation type="journal article" date="2009" name="Biochim. Biophys. Acta">
        <title>Role of the intracellular localization of HIF-prolyl hydroxylases.</title>
        <authorList>
            <person name="Yasumoto K."/>
            <person name="Kowata Y."/>
            <person name="Yoshida A."/>
            <person name="Torii S."/>
            <person name="Sogawa K."/>
        </authorList>
    </citation>
    <scope>SUBCELLULAR LOCATION</scope>
    <scope>FUNCTION</scope>
</reference>
<reference key="20">
    <citation type="journal article" date="2009" name="J. Biol. Chem.">
        <title>Erythrocytosis-associated HIF-2alpha mutations demonstrate a critical role for residues C-terminal to the hydroxylacceptor proline.</title>
        <authorList>
            <person name="Furlow P.W."/>
            <person name="Percy M.J."/>
            <person name="Sutherland S."/>
            <person name="Bierl C."/>
            <person name="McMullin M.F."/>
            <person name="Master S.R."/>
            <person name="Lappin T.R."/>
            <person name="Lee F.S."/>
        </authorList>
    </citation>
    <scope>INTERACTION WITH EPAS1</scope>
</reference>
<reference key="21">
    <citation type="journal article" date="2010" name="FEBS J.">
        <title>Evidence for the slow reaction of hypoxia-inducible factor prolyl hydroxylase 2 with oxygen.</title>
        <authorList>
            <person name="Flashman E."/>
            <person name="Hoffart L.M."/>
            <person name="Hamed R.B."/>
            <person name="Bollinger J.M. Jr."/>
            <person name="Krebs C."/>
            <person name="Schofield C.J."/>
        </authorList>
    </citation>
    <scope>ACTIVITY REGULATION</scope>
</reference>
<reference key="22">
    <citation type="journal article" date="2010" name="PLoS Genet.">
        <title>Identifying signatures of natural selection in Tibetan and Andean populations using dense genome scan data.</title>
        <authorList>
            <person name="Bigham A."/>
            <person name="Bauchet M."/>
            <person name="Pinto D."/>
            <person name="Mao X."/>
            <person name="Akey J.M."/>
            <person name="Mei R."/>
            <person name="Scherer S.W."/>
            <person name="Julian C.G."/>
            <person name="Wilson M.J."/>
            <person name="Lopez Herraez D."/>
            <person name="Brutsaert T."/>
            <person name="Parra E.J."/>
            <person name="Moore L.G."/>
            <person name="Shriver M.D."/>
        </authorList>
    </citation>
    <scope>POLYMORPHISM</scope>
</reference>
<reference key="23">
    <citation type="journal article" date="2010" name="Sci. Signal.">
        <title>Quantitative phosphoproteomics reveals widespread full phosphorylation site occupancy during mitosis.</title>
        <authorList>
            <person name="Olsen J.V."/>
            <person name="Vermeulen M."/>
            <person name="Santamaria A."/>
            <person name="Kumar C."/>
            <person name="Miller M.L."/>
            <person name="Jensen L.J."/>
            <person name="Gnad F."/>
            <person name="Cox J."/>
            <person name="Jensen T.S."/>
            <person name="Nigg E.A."/>
            <person name="Brunak S."/>
            <person name="Mann M."/>
        </authorList>
    </citation>
    <scope>PHOSPHORYLATION [LARGE SCALE ANALYSIS] AT SER-125</scope>
    <scope>IDENTIFICATION BY MASS SPECTROMETRY [LARGE SCALE ANALYSIS]</scope>
    <source>
        <tissue>Cervix carcinoma</tissue>
    </source>
</reference>
<reference key="24">
    <citation type="journal article" date="2010" name="Science">
        <title>Genetic evidence for high-altitude adaptation in Tibet.</title>
        <authorList>
            <person name="Simonson T.S."/>
            <person name="Yang Y."/>
            <person name="Huff C.D."/>
            <person name="Yun H."/>
            <person name="Qin G."/>
            <person name="Witherspoon D.J."/>
            <person name="Bai Z."/>
            <person name="Lorenzo F.R."/>
            <person name="Xing J."/>
            <person name="Jorde L.B."/>
            <person name="Prchal J.T."/>
            <person name="Ge R."/>
        </authorList>
    </citation>
    <scope>POLYMORPHISM</scope>
</reference>
<reference key="25">
    <citation type="journal article" date="2011" name="BMC Syst. Biol.">
        <title>Initial characterization of the human central proteome.</title>
        <authorList>
            <person name="Burkard T.R."/>
            <person name="Planyavsky M."/>
            <person name="Kaupe I."/>
            <person name="Breitwieser F.P."/>
            <person name="Buerckstuemmer T."/>
            <person name="Bennett K.L."/>
            <person name="Superti-Furga G."/>
            <person name="Colinge J."/>
        </authorList>
    </citation>
    <scope>IDENTIFICATION BY MASS SPECTROMETRY [LARGE SCALE ANALYSIS]</scope>
</reference>
<reference key="26">
    <citation type="journal article" date="2012" name="Cancer">
        <title>Prolyl hydroxylase-2 (PHD2) exerts tumor-suppressive activity in pancreatic cancer.</title>
        <authorList>
            <person name="Su Y."/>
            <person name="Loos M."/>
            <person name="Giese N."/>
            <person name="Metzen E."/>
            <person name="Buchler M.W."/>
            <person name="Friess H."/>
            <person name="Kornberg A."/>
            <person name="Buchler P."/>
        </authorList>
    </citation>
    <scope>FUNCTION</scope>
    <scope>INDUCTION</scope>
</reference>
<reference key="27">
    <citation type="journal article" date="2012" name="Nat. Cell Biol.">
        <title>The LIMD1 protein bridges an association between the prolyl hydroxylases and VHL to repress HIF-1 activity.</title>
        <authorList>
            <person name="Foxler D.E."/>
            <person name="Bridge K.S."/>
            <person name="James V."/>
            <person name="Webb T.M."/>
            <person name="Mee M."/>
            <person name="Wong S.C."/>
            <person name="Feng Y."/>
            <person name="Constantin-Teodosiu D."/>
            <person name="Petursdottir T.E."/>
            <person name="Bjornsson J."/>
            <person name="Ingvarsson S."/>
            <person name="Ratcliffe P.J."/>
            <person name="Longmore G.D."/>
            <person name="Sharp T.V."/>
        </authorList>
    </citation>
    <scope>INTERACTION WITH LIMD1</scope>
    <scope>IDENTIFICATION IN A COMPLEX WITH LIMD1; VHL; ELOB AND CUL2</scope>
</reference>
<reference key="28">
    <citation type="journal article" date="2012" name="Proc. Natl. Acad. Sci. U.S.A.">
        <title>N-terminal acetylome analyses and functional insights of the N-terminal acetyltransferase NatB.</title>
        <authorList>
            <person name="Van Damme P."/>
            <person name="Lasa M."/>
            <person name="Polevoda B."/>
            <person name="Gazquez C."/>
            <person name="Elosegui-Artola A."/>
            <person name="Kim D.S."/>
            <person name="De Juan-Pardo E."/>
            <person name="Demeyer K."/>
            <person name="Hole K."/>
            <person name="Larrea E."/>
            <person name="Timmerman E."/>
            <person name="Prieto J."/>
            <person name="Arnesen T."/>
            <person name="Sherman F."/>
            <person name="Gevaert K."/>
            <person name="Aldabe R."/>
        </authorList>
    </citation>
    <scope>ACETYLATION [LARGE SCALE ANALYSIS] AT ALA-2</scope>
    <scope>CLEAVAGE OF INITIATOR METHIONINE [LARGE SCALE ANALYSIS]</scope>
    <scope>IDENTIFICATION BY MASS SPECTROMETRY [LARGE SCALE ANALYSIS]</scope>
</reference>
<reference key="29">
    <citation type="journal article" date="2013" name="J. Proteome Res.">
        <title>Toward a comprehensive characterization of a human cancer cell phosphoproteome.</title>
        <authorList>
            <person name="Zhou H."/>
            <person name="Di Palma S."/>
            <person name="Preisinger C."/>
            <person name="Peng M."/>
            <person name="Polat A.N."/>
            <person name="Heck A.J."/>
            <person name="Mohammed S."/>
        </authorList>
    </citation>
    <scope>PHOSPHORYLATION [LARGE SCALE ANALYSIS] AT SER-12 AND SER-125</scope>
    <scope>IDENTIFICATION BY MASS SPECTROMETRY [LARGE SCALE ANALYSIS]</scope>
    <source>
        <tissue>Cervix carcinoma</tissue>
        <tissue>Erythroleukemia</tissue>
    </source>
</reference>
<reference key="30">
    <citation type="journal article" date="2015" name="Oncogene">
        <title>SIRT2 regulates tumour hypoxia response by promoting HIF-1alpha hydroxylation.</title>
        <authorList>
            <person name="Seo K.S."/>
            <person name="Park J.H."/>
            <person name="Heo J.Y."/>
            <person name="Jing K."/>
            <person name="Han J."/>
            <person name="Min K.N."/>
            <person name="Kim C."/>
            <person name="Koh G.Y."/>
            <person name="Lim K."/>
            <person name="Kang G.Y."/>
            <person name="Uee Lee J."/>
            <person name="Yim Y.H."/>
            <person name="Shong M."/>
            <person name="Kwak T.H."/>
            <person name="Kweon G.R."/>
        </authorList>
    </citation>
    <scope>INTERACTION WITH HIF1A</scope>
</reference>
<reference key="31">
    <citation type="journal article" date="2015" name="PLoS ONE">
        <title>Myeloid translocation gene-16 co-repressor promotes degradation of hypoxia-inducible factor 1.</title>
        <authorList>
            <person name="Kumar P."/>
            <person name="Gullberg U."/>
            <person name="Olsson I."/>
            <person name="Ajore R."/>
        </authorList>
    </citation>
    <scope>INTERACTION WITH CBFA2T3 AND HIF1A</scope>
</reference>
<reference evidence="37 38" key="32">
    <citation type="journal article" date="2006" name="Proc. Natl. Acad. Sci. U.S.A.">
        <title>Cellular oxygen sensing: crystal structure of hypoxia-inducible factor prolyl hydroxylase (PHD2).</title>
        <authorList>
            <person name="McDonough M.A."/>
            <person name="Li V."/>
            <person name="Flashman E."/>
            <person name="Chowdhury R."/>
            <person name="Mohr C."/>
            <person name="Lienard B.M.R."/>
            <person name="Zondlo J."/>
            <person name="Oldham N.J."/>
            <person name="Clifton I.J."/>
            <person name="Lewis J."/>
            <person name="McNeill L.A."/>
            <person name="Kurzeja R.J."/>
            <person name="Hewitson K.S."/>
            <person name="Yang E."/>
            <person name="Jordan S."/>
            <person name="Syed R.S."/>
            <person name="Schofield C.J."/>
        </authorList>
    </citation>
    <scope>X-RAY CRYSTALLOGRAPHY (1.7 ANGSTROMS) OF 181-417 IN COMPLEXES WITH IRON AND COMPETITIVE INHIBITOR</scope>
    <scope>METAL-BINDING SITES</scope>
    <scope>MUTAGENESIS OF TYR-303 AND ARG-383</scope>
    <scope>SUBUNIT</scope>
    <scope>COFACTOR</scope>
</reference>
<reference evidence="41 42" key="33">
    <citation type="journal article" date="2009" name="Structure">
        <title>Structural basis for binding of hypoxia-inducible factor to the oxygen-sensing prolyl hydroxylases.</title>
        <authorList>
            <person name="Chowdhury R."/>
            <person name="McDonough M.A."/>
            <person name="Mecinovic J."/>
            <person name="Loenarz C."/>
            <person name="Flashman E."/>
            <person name="Hewitson K.S."/>
            <person name="Domene C."/>
            <person name="Schofield C.J."/>
        </authorList>
    </citation>
    <scope>X-RAY CRYSTALLOGRAPHY (2.0 ANGSTROMS) OF 181-426 OF WILD TYPE AND MUTANTS ALA-252; ALA-254; LYS-254 AND ALA-398 IN COMPLEX WITH HIF1A</scope>
    <scope>IRON</scope>
    <scope>N-OXALYGLYCINE AND MANGANESE</scope>
    <scope>METAL-BINDING SITES</scope>
    <scope>COFACTOR</scope>
</reference>
<reference evidence="39 40" key="34">
    <citation type="journal article" date="2011" name="J. Mol. Biol.">
        <title>Studies on the reaction of nitric oxide with the hypoxia-inducible factor prolyl hydroxylase domain 2 (EGLN1).</title>
        <authorList>
            <person name="Chowdhury R."/>
            <person name="Flashman E."/>
            <person name="Mecinovic J."/>
            <person name="Kramer H.B."/>
            <person name="Kessler B.M."/>
            <person name="Frapart Y.M."/>
            <person name="Boucher J.L."/>
            <person name="Clifton I.J."/>
            <person name="McDonough M.A."/>
            <person name="Schofield C.J."/>
        </authorList>
    </citation>
    <scope>X-RAY CRYSTALLOGRAPHY (2.0 ANGSTROMS) OF 181-426 IN COMPLEX WITH NITRIC OXIDE OR A NITRIC OXIDE TRANSFER REAGENT</scope>
    <scope>IDENTIFICATION BY MASS SPECTROMETRY</scope>
    <scope>S-NITROSYLATION AT CYS-201; CYS-208; CYS-302; CYS-323 AND CYS-326</scope>
    <scope>MUTAGENESIS OF CYS-201; CYS-208; CYS-266; CYS-283; CYS-302; CYS-323 AND CYS-326</scope>
</reference>
<reference evidence="43" key="35">
    <citation type="journal article" date="2017" name="J. Med. Chem.">
        <title>1,2,4-Triazolo-[1,5-a]pyridine HIF Prolylhydroxylase Domain-1 (PHD-1) Inhibitors With a Novel Monodentate Binding Interaction.</title>
        <authorList>
            <person name="Ahmed S."/>
            <person name="Ayscough A."/>
            <person name="Barker G.R."/>
            <person name="Canning H.E."/>
            <person name="Davenport R."/>
            <person name="Downham R."/>
            <person name="Harrison D."/>
            <person name="Jenkins K."/>
            <person name="Kinsella N."/>
            <person name="Livermore D.G."/>
            <person name="Wright S."/>
            <person name="Ivetac A.D."/>
            <person name="Skene R."/>
            <person name="Wilkens S.J."/>
            <person name="Webster N.A."/>
            <person name="Hendrick A.G."/>
        </authorList>
    </citation>
    <scope>X-RAY CRYSTALLOGRAPHY (2.15 ANGSTROMS) OF 181-416 IN COMPLEX WITH INHIBITOR AND IRON</scope>
    <scope>COFACTOR</scope>
</reference>
<reference key="36">
    <citation type="journal article" date="2006" name="Proc. Natl. Acad. Sci. U.S.A.">
        <title>A family with erythrocytosis establishes a role for prolyl hydroxylase domain protein 2 in oxygen homeostasis.</title>
        <authorList>
            <person name="Percy M.J."/>
            <person name="Zhao Q."/>
            <person name="Flores A."/>
            <person name="Harrison C."/>
            <person name="Lappin T.R."/>
            <person name="Maxwell P.H."/>
            <person name="McMullin M.F."/>
            <person name="Lee F.S."/>
        </authorList>
    </citation>
    <scope>VARIANT ECYT3 ARG-317</scope>
    <scope>CHARACTERIZATION OF VARIANT ECYT3 ARG-317</scope>
</reference>
<reference key="37">
    <citation type="journal article" date="2007" name="Blood">
        <title>A novel erythrocytosis-associated PHD2 mutation suggests the location of a HIF binding groove.</title>
        <authorList>
            <person name="Percy M.J."/>
            <person name="Furlow P.W."/>
            <person name="Beer P.A."/>
            <person name="Lappin T.R.J."/>
            <person name="McMullin M.F."/>
            <person name="Lee F.S."/>
        </authorList>
    </citation>
    <scope>VARIANT ECYT3 HIS-371</scope>
    <scope>CHARACTERIZATION OF VARIANT EXCYT3 HIS-371</scope>
</reference>
<reference key="38">
    <citation type="journal article" date="2014" name="J. Biol. Chem.">
        <title>Defective Tibetan PHD2 binding to p23 links high altitude adaption to altered oxygen sensing.</title>
        <authorList>
            <person name="Song D."/>
            <person name="Li L.S."/>
            <person name="Arsenault P.R."/>
            <person name="Tan Q."/>
            <person name="Bigham A.W."/>
            <person name="Heaton-Johnson K.J."/>
            <person name="Master S.R."/>
            <person name="Lee F.S."/>
        </authorList>
    </citation>
    <scope>VARIANTS GLU-4 AND SER-127</scope>
    <scope>POLYMORPHISM</scope>
    <scope>INTERACTION WITH PTGES3</scope>
    <scope>CHARACTERIZATION OF VARIANTS GLU-4 AND SER-127</scope>
</reference>
<reference key="39">
    <citation type="journal article" date="2014" name="Nat. Genet.">
        <title>A genetic mechanism for Tibetan high-altitude adaptation.</title>
        <authorList>
            <person name="Lorenzo F.R."/>
            <person name="Huff C."/>
            <person name="Myllymaeki M."/>
            <person name="Olenchock B."/>
            <person name="Swierczek S."/>
            <person name="Tashi T."/>
            <person name="Gordeuk V."/>
            <person name="Wuren T."/>
            <person name="Ri-Li G."/>
            <person name="McClain D.A."/>
            <person name="Khan T.M."/>
            <person name="Koul P.A."/>
            <person name="Guchhait P."/>
            <person name="Salama M.E."/>
            <person name="Xing J."/>
            <person name="Semenza G.L."/>
            <person name="Liberzon E."/>
            <person name="Wilson A."/>
            <person name="Simonson T.S."/>
            <person name="Jorde L.B."/>
            <person name="Kaelin W.G. Jr."/>
            <person name="Koivunen P."/>
            <person name="Prchal J.T."/>
        </authorList>
    </citation>
    <scope>VARIANTS GLU-4 AND SER-127</scope>
    <scope>FUNCTION</scope>
    <scope>CATALYTIC ACTIVITY</scope>
    <scope>BIOPHYSICOCHEMICAL PROPERTIES</scope>
    <scope>POLYMORPHISM</scope>
    <scope>CHARACTERIZATION OF VARIANTS GLU-4 AND SER-127</scope>
</reference>
<protein>
    <recommendedName>
        <fullName>Egl nine homolog 1</fullName>
        <ecNumber evidence="29">1.14.11.29</ecNumber>
    </recommendedName>
    <alternativeName>
        <fullName>Hypoxia-inducible factor prolyl hydroxylase 2</fullName>
        <shortName>HIF-PH2</shortName>
        <shortName>HIF-prolyl hydroxylase 2</shortName>
        <shortName>HPH-2</shortName>
    </alternativeName>
    <alternativeName>
        <fullName>Prolyl hydroxylase domain-containing protein 2</fullName>
        <shortName>PHD2</shortName>
    </alternativeName>
    <alternativeName>
        <fullName>SM-20</fullName>
    </alternativeName>
</protein>
<organism>
    <name type="scientific">Homo sapiens</name>
    <name type="common">Human</name>
    <dbReference type="NCBI Taxonomy" id="9606"/>
    <lineage>
        <taxon>Eukaryota</taxon>
        <taxon>Metazoa</taxon>
        <taxon>Chordata</taxon>
        <taxon>Craniata</taxon>
        <taxon>Vertebrata</taxon>
        <taxon>Euteleostomi</taxon>
        <taxon>Mammalia</taxon>
        <taxon>Eutheria</taxon>
        <taxon>Euarchontoglires</taxon>
        <taxon>Primates</taxon>
        <taxon>Haplorrhini</taxon>
        <taxon>Catarrhini</taxon>
        <taxon>Hominidae</taxon>
        <taxon>Homo</taxon>
    </lineage>
</organism>
<accession>Q9GZT9</accession>
<accession>Q8N3M8</accession>
<accession>Q9BZS8</accession>
<accession>Q9BZT0</accession>
<feature type="initiator methionine" description="Removed" evidence="44 46">
    <location>
        <position position="1"/>
    </location>
</feature>
<feature type="chain" id="PRO_0000206661" description="Egl nine homolog 1">
    <location>
        <begin position="2"/>
        <end position="426"/>
    </location>
</feature>
<feature type="domain" description="Fe2OG dioxygenase" evidence="2">
    <location>
        <begin position="291"/>
        <end position="392"/>
    </location>
</feature>
<feature type="zinc finger region" description="MYND-type; atypical" evidence="1">
    <location>
        <begin position="21"/>
        <end position="58"/>
    </location>
</feature>
<feature type="region of interest" description="Required for nuclear export">
    <location>
        <begin position="6"/>
        <end position="20"/>
    </location>
</feature>
<feature type="region of interest" description="Disordered" evidence="3">
    <location>
        <begin position="65"/>
        <end position="129"/>
    </location>
</feature>
<feature type="region of interest" description="Disordered" evidence="3">
    <location>
        <begin position="160"/>
        <end position="184"/>
    </location>
</feature>
<feature type="region of interest" description="Beta(2)beta(3) 'finger-like' loop" evidence="16">
    <location>
        <begin position="241"/>
        <end position="251"/>
    </location>
</feature>
<feature type="compositionally biased region" description="Pro residues" evidence="3">
    <location>
        <begin position="77"/>
        <end position="87"/>
    </location>
</feature>
<feature type="compositionally biased region" description="Basic and acidic residues" evidence="3">
    <location>
        <begin position="89"/>
        <end position="103"/>
    </location>
</feature>
<feature type="compositionally biased region" description="Low complexity" evidence="3">
    <location>
        <begin position="120"/>
        <end position="129"/>
    </location>
</feature>
<feature type="binding site" evidence="1">
    <location>
        <position position="21"/>
    </location>
    <ligand>
        <name>Zn(2+)</name>
        <dbReference type="ChEBI" id="CHEBI:29105"/>
        <label>1</label>
    </ligand>
</feature>
<feature type="binding site" evidence="1">
    <location>
        <position position="24"/>
    </location>
    <ligand>
        <name>Zn(2+)</name>
        <dbReference type="ChEBI" id="CHEBI:29105"/>
        <label>1</label>
    </ligand>
</feature>
<feature type="binding site" evidence="1">
    <location>
        <position position="33"/>
    </location>
    <ligand>
        <name>Zn(2+)</name>
        <dbReference type="ChEBI" id="CHEBI:29105"/>
        <label>2</label>
    </ligand>
</feature>
<feature type="binding site" evidence="1">
    <location>
        <position position="36"/>
    </location>
    <ligand>
        <name>Zn(2+)</name>
        <dbReference type="ChEBI" id="CHEBI:29105"/>
        <label>2</label>
    </ligand>
</feature>
<feature type="binding site" evidence="1">
    <location>
        <position position="42"/>
    </location>
    <ligand>
        <name>Zn(2+)</name>
        <dbReference type="ChEBI" id="CHEBI:29105"/>
        <label>1</label>
    </ligand>
</feature>
<feature type="binding site" evidence="1">
    <location>
        <position position="46"/>
    </location>
    <ligand>
        <name>Zn(2+)</name>
        <dbReference type="ChEBI" id="CHEBI:29105"/>
        <label>1</label>
    </ligand>
</feature>
<feature type="binding site" evidence="1">
    <location>
        <position position="54"/>
    </location>
    <ligand>
        <name>Zn(2+)</name>
        <dbReference type="ChEBI" id="CHEBI:29105"/>
        <label>2</label>
    </ligand>
</feature>
<feature type="binding site" evidence="1">
    <location>
        <position position="58"/>
    </location>
    <ligand>
        <name>Zn(2+)</name>
        <dbReference type="ChEBI" id="CHEBI:29105"/>
        <label>2</label>
    </ligand>
</feature>
<feature type="binding site" evidence="14 19 31 37 42 43">
    <location>
        <position position="313"/>
    </location>
    <ligand>
        <name>Fe cation</name>
        <dbReference type="ChEBI" id="CHEBI:24875"/>
    </ligand>
</feature>
<feature type="binding site" evidence="14 19 31 37 42 43">
    <location>
        <position position="315"/>
    </location>
    <ligand>
        <name>Fe cation</name>
        <dbReference type="ChEBI" id="CHEBI:24875"/>
    </ligand>
</feature>
<feature type="binding site" evidence="14 19 31 37 42 43">
    <location>
        <position position="374"/>
    </location>
    <ligand>
        <name>Fe cation</name>
        <dbReference type="ChEBI" id="CHEBI:24875"/>
    </ligand>
</feature>
<feature type="binding site" evidence="35">
    <location>
        <position position="383"/>
    </location>
    <ligand>
        <name>2-oxoglutarate</name>
        <dbReference type="ChEBI" id="CHEBI:16810"/>
    </ligand>
</feature>
<feature type="modified residue" description="N-acetylalanine" evidence="44 46">
    <location>
        <position position="2"/>
    </location>
</feature>
<feature type="modified residue" description="Phosphoserine" evidence="47">
    <location>
        <position position="12"/>
    </location>
</feature>
<feature type="modified residue" description="Phosphoserine" evidence="45 47">
    <location>
        <position position="125"/>
    </location>
</feature>
<feature type="modified residue" description="S-nitrosocysteine" evidence="24">
    <location>
        <position position="201"/>
    </location>
</feature>
<feature type="modified residue" description="S-nitrosocysteine" evidence="24">
    <location>
        <position position="208"/>
    </location>
</feature>
<feature type="modified residue" description="S-nitrosocysteine" evidence="24">
    <location>
        <position position="302"/>
    </location>
</feature>
<feature type="modified residue" description="S-nitrosocysteine" evidence="24">
    <location>
        <position position="323"/>
    </location>
</feature>
<feature type="modified residue" description="S-nitrosocysteine" evidence="24">
    <location>
        <position position="326"/>
    </location>
</feature>
<feature type="splice variant" id="VSP_042191" description="In isoform 3." evidence="32">
    <original>CQGSEGALGHGVGPHQHSGPAPPAAVPPPRAGAREPRKAAARRDNASGDAAKGKVKAKPPADPAAAASPCRAAAGGQGSAVAAEAEPGKEEPPARSSLFQEKANLYPPSNTPGDALSP</original>
    <variation>LLGGYRFAFSWNSDERA</variation>
    <location>
        <begin position="58"/>
        <end position="175"/>
    </location>
</feature>
<feature type="splice variant" id="VSP_007569" description="In isoform 2." evidence="33">
    <location>
        <begin position="338"/>
        <end position="359"/>
    </location>
</feature>
<feature type="sequence variant" id="VAR_071858" description="Increased protection from polycythemia at high altitude; when associated with S-127; dbSNP:rs186996510." evidence="28 29">
    <original>D</original>
    <variation>E</variation>
    <location>
        <position position="4"/>
    </location>
</feature>
<feature type="sequence variant" id="VAR_071859" description="Increased protection from polycythemia at high altitude; when associated with E-4; dbSNP:rs12097901." evidence="28 29">
    <original>C</original>
    <variation>S</variation>
    <location>
        <position position="127"/>
    </location>
</feature>
<feature type="sequence variant" id="VAR_027371" description="In ECYT3; marked decrease in enzyme activity; dbSNP:rs80358193." evidence="13">
    <original>P</original>
    <variation>R</variation>
    <location>
        <position position="317"/>
    </location>
</feature>
<feature type="sequence variant" id="VAR_045902" description="In ECYT3; decreased interaction with HIF1A and EPAS1 and decreased enzyme activity; dbSNP:rs119476044." evidence="15">
    <original>R</original>
    <variation>H</variation>
    <location>
        <position position="371"/>
    </location>
</feature>
<feature type="mutagenesis site" description="Little change in enzyme activity." evidence="24">
    <original>C</original>
    <variation>A</variation>
    <location>
        <position position="201"/>
    </location>
</feature>
<feature type="mutagenesis site" description="Little change in enzyme activity." evidence="24">
    <original>C</original>
    <variation>A</variation>
    <location>
        <position position="208"/>
    </location>
</feature>
<feature type="mutagenesis site" description="Reduced C-terminal ODD domain (CODD) hydroxylation of HIF1A.">
    <original>R</original>
    <variation>A</variation>
    <location>
        <position position="252"/>
    </location>
</feature>
<feature type="mutagenesis site" description="Reduced C-terminal ODD domain (CODD) hxdroxylation of HIF1A.">
    <original>D</original>
    <variation>A</variation>
    <variation>K</variation>
    <location>
        <position position="254"/>
    </location>
</feature>
<feature type="mutagenesis site" description="Little change in enzyme activity." evidence="24">
    <original>C</original>
    <variation>A</variation>
    <location>
        <position position="266"/>
    </location>
</feature>
<feature type="mutagenesis site" description="Little change in enzyme activity." evidence="24">
    <original>C</original>
    <variation>A</variation>
    <location>
        <position position="283"/>
    </location>
</feature>
<feature type="mutagenesis site" description="Slight increase in enzyme activity." evidence="24">
    <original>C</original>
    <variation>A</variation>
    <location>
        <position position="302"/>
    </location>
</feature>
<feature type="mutagenesis site" description="No effect." evidence="14">
    <original>Y</original>
    <variation>F</variation>
    <location>
        <position position="303"/>
    </location>
</feature>
<feature type="mutagenesis site" description="Little change in enzyme activity." evidence="24">
    <original>C</original>
    <variation>A</variation>
    <location>
        <position position="323"/>
    </location>
</feature>
<feature type="mutagenesis site" description="Slight increase in enzyme activity." evidence="24">
    <original>C</original>
    <variation>A</variation>
    <location>
        <position position="326"/>
    </location>
</feature>
<feature type="mutagenesis site" description="Reduces enzyme activity by 95%." evidence="14">
    <original>R</original>
    <variation>A</variation>
    <location>
        <position position="383"/>
    </location>
</feature>
<feature type="helix" evidence="53">
    <location>
        <begin position="190"/>
        <end position="196"/>
    </location>
</feature>
<feature type="helix" evidence="53">
    <location>
        <begin position="198"/>
        <end position="205"/>
    </location>
</feature>
<feature type="strand" evidence="53">
    <location>
        <begin position="206"/>
        <end position="214"/>
    </location>
</feature>
<feature type="helix" evidence="53">
    <location>
        <begin position="216"/>
        <end position="231"/>
    </location>
</feature>
<feature type="turn" evidence="52">
    <location>
        <begin position="233"/>
        <end position="235"/>
    </location>
</feature>
<feature type="strand" evidence="54">
    <location>
        <begin position="240"/>
        <end position="242"/>
    </location>
</feature>
<feature type="strand" evidence="53">
    <location>
        <begin position="244"/>
        <end position="246"/>
    </location>
</feature>
<feature type="helix" evidence="53">
    <location>
        <begin position="248"/>
        <end position="250"/>
    </location>
</feature>
<feature type="strand" evidence="53">
    <location>
        <begin position="255"/>
        <end position="259"/>
    </location>
</feature>
<feature type="strand" evidence="51">
    <location>
        <begin position="261"/>
        <end position="263"/>
    </location>
</feature>
<feature type="helix" evidence="53">
    <location>
        <begin position="267"/>
        <end position="282"/>
    </location>
</feature>
<feature type="turn" evidence="53">
    <location>
        <begin position="283"/>
        <end position="286"/>
    </location>
</feature>
<feature type="strand" evidence="48">
    <location>
        <begin position="287"/>
        <end position="289"/>
    </location>
</feature>
<feature type="strand" evidence="53">
    <location>
        <begin position="292"/>
        <end position="295"/>
    </location>
</feature>
<feature type="strand" evidence="53">
    <location>
        <begin position="298"/>
        <end position="305"/>
    </location>
</feature>
<feature type="strand" evidence="53">
    <location>
        <begin position="308"/>
        <end position="313"/>
    </location>
</feature>
<feature type="strand" evidence="53">
    <location>
        <begin position="315"/>
        <end position="318"/>
    </location>
</feature>
<feature type="strand" evidence="53">
    <location>
        <begin position="320"/>
        <end position="329"/>
    </location>
</feature>
<feature type="strand" evidence="49">
    <location>
        <begin position="331"/>
        <end position="333"/>
    </location>
</feature>
<feature type="helix" evidence="53">
    <location>
        <begin position="336"/>
        <end position="339"/>
    </location>
</feature>
<feature type="strand" evidence="53">
    <location>
        <begin position="343"/>
        <end position="345"/>
    </location>
</feature>
<feature type="helix" evidence="55">
    <location>
        <begin position="347"/>
        <end position="349"/>
    </location>
</feature>
<feature type="strand" evidence="53">
    <location>
        <begin position="354"/>
        <end position="356"/>
    </location>
</feature>
<feature type="strand" evidence="53">
    <location>
        <begin position="362"/>
        <end position="367"/>
    </location>
</feature>
<feature type="strand" evidence="53">
    <location>
        <begin position="374"/>
        <end position="392"/>
    </location>
</feature>
<feature type="helix" evidence="53">
    <location>
        <begin position="393"/>
        <end position="404"/>
    </location>
</feature>
<feature type="helix" evidence="50">
    <location>
        <begin position="407"/>
        <end position="409"/>
    </location>
</feature>
<gene>
    <name evidence="36" type="primary">EGLN1</name>
    <name type="synonym">C1orf12</name>
    <name type="ORF">PNAS-118</name>
    <name type="ORF">PNAS-137</name>
</gene>
<name>EGLN1_HUMAN</name>
<proteinExistence type="evidence at protein level"/>
<dbReference type="EC" id="1.14.11.29" evidence="29"/>
<dbReference type="EMBL" id="AF246631">
    <property type="protein sequence ID" value="AAG34568.1"/>
    <property type="molecule type" value="Genomic_DNA"/>
</dbReference>
<dbReference type="EMBL" id="AF246630">
    <property type="protein sequence ID" value="AAG34568.1"/>
    <property type="status" value="JOINED"/>
    <property type="molecule type" value="Genomic_DNA"/>
</dbReference>
<dbReference type="EMBL" id="AF229245">
    <property type="protein sequence ID" value="AAG33965.1"/>
    <property type="molecule type" value="mRNA"/>
</dbReference>
<dbReference type="EMBL" id="AJ310543">
    <property type="protein sequence ID" value="CAC42509.1"/>
    <property type="molecule type" value="mRNA"/>
</dbReference>
<dbReference type="EMBL" id="AL833885">
    <property type="protein sequence ID" value="CAD38741.2"/>
    <property type="molecule type" value="mRNA"/>
</dbReference>
<dbReference type="EMBL" id="AF277174">
    <property type="protein sequence ID" value="AAK07534.1"/>
    <property type="status" value="ALT_INIT"/>
    <property type="molecule type" value="mRNA"/>
</dbReference>
<dbReference type="EMBL" id="AF277176">
    <property type="protein sequence ID" value="AAK07536.1"/>
    <property type="status" value="ALT_FRAME"/>
    <property type="molecule type" value="mRNA"/>
</dbReference>
<dbReference type="EMBL" id="AL117352">
    <property type="status" value="NOT_ANNOTATED_CDS"/>
    <property type="molecule type" value="Genomic_DNA"/>
</dbReference>
<dbReference type="EMBL" id="AL445524">
    <property type="status" value="NOT_ANNOTATED_CDS"/>
    <property type="molecule type" value="Genomic_DNA"/>
</dbReference>
<dbReference type="CCDS" id="CCDS1595.1">
    <molecule id="Q9GZT9-1"/>
</dbReference>
<dbReference type="RefSeq" id="NP_071334.1">
    <molecule id="Q9GZT9-1"/>
    <property type="nucleotide sequence ID" value="NM_022051.3"/>
</dbReference>
<dbReference type="PDB" id="2G19">
    <property type="method" value="X-ray"/>
    <property type="resolution" value="1.70 A"/>
    <property type="chains" value="A=181-417"/>
</dbReference>
<dbReference type="PDB" id="2G1M">
    <property type="method" value="X-ray"/>
    <property type="resolution" value="2.20 A"/>
    <property type="chains" value="A=181-426"/>
</dbReference>
<dbReference type="PDB" id="2HBT">
    <property type="method" value="X-ray"/>
    <property type="resolution" value="1.60 A"/>
    <property type="chains" value="A=188-426"/>
</dbReference>
<dbReference type="PDB" id="2HBU">
    <property type="method" value="X-ray"/>
    <property type="resolution" value="1.85 A"/>
    <property type="chains" value="A=188-426"/>
</dbReference>
<dbReference type="PDB" id="2Y33">
    <property type="method" value="X-ray"/>
    <property type="resolution" value="2.00 A"/>
    <property type="chains" value="A=181-426"/>
</dbReference>
<dbReference type="PDB" id="2Y34">
    <property type="method" value="X-ray"/>
    <property type="resolution" value="2.01 A"/>
    <property type="chains" value="A=181-426"/>
</dbReference>
<dbReference type="PDB" id="3HQR">
    <property type="method" value="X-ray"/>
    <property type="resolution" value="2.00 A"/>
    <property type="chains" value="A=181-426"/>
</dbReference>
<dbReference type="PDB" id="3HQU">
    <property type="method" value="X-ray"/>
    <property type="resolution" value="2.30 A"/>
    <property type="chains" value="A=181-426"/>
</dbReference>
<dbReference type="PDB" id="3OUH">
    <property type="method" value="X-ray"/>
    <property type="resolution" value="2.51 A"/>
    <property type="chains" value="A=181-416"/>
</dbReference>
<dbReference type="PDB" id="3OUI">
    <property type="method" value="X-ray"/>
    <property type="resolution" value="1.70 A"/>
    <property type="chains" value="A=181-392"/>
</dbReference>
<dbReference type="PDB" id="3OUJ">
    <property type="method" value="X-ray"/>
    <property type="resolution" value="2.30 A"/>
    <property type="chains" value="A=181-416"/>
</dbReference>
<dbReference type="PDB" id="4BQW">
    <property type="method" value="X-ray"/>
    <property type="resolution" value="1.79 A"/>
    <property type="chains" value="A=181-426"/>
</dbReference>
<dbReference type="PDB" id="4BQX">
    <property type="method" value="X-ray"/>
    <property type="resolution" value="1.79 A"/>
    <property type="chains" value="A=181-426"/>
</dbReference>
<dbReference type="PDB" id="4BQY">
    <property type="method" value="X-ray"/>
    <property type="resolution" value="1.53 A"/>
    <property type="chains" value="A=181-426"/>
</dbReference>
<dbReference type="PDB" id="4JZR">
    <property type="method" value="X-ray"/>
    <property type="resolution" value="2.10 A"/>
    <property type="chains" value="A=189-399"/>
</dbReference>
<dbReference type="PDB" id="4KBZ">
    <property type="method" value="X-ray"/>
    <property type="resolution" value="2.15 A"/>
    <property type="chains" value="A=184-419"/>
</dbReference>
<dbReference type="PDB" id="4UWD">
    <property type="method" value="X-ray"/>
    <property type="resolution" value="1.72 A"/>
    <property type="chains" value="A=181-426"/>
</dbReference>
<dbReference type="PDB" id="5A3U">
    <property type="method" value="X-ray"/>
    <property type="resolution" value="3.30 A"/>
    <property type="chains" value="A/B/C=181-426"/>
</dbReference>
<dbReference type="PDB" id="5L9B">
    <property type="method" value="X-ray"/>
    <property type="resolution" value="1.95 A"/>
    <property type="chains" value="A/B=181-426"/>
</dbReference>
<dbReference type="PDB" id="5L9R">
    <property type="method" value="X-ray"/>
    <property type="resolution" value="1.81 A"/>
    <property type="chains" value="A=181-426"/>
</dbReference>
<dbReference type="PDB" id="5L9V">
    <property type="method" value="X-ray"/>
    <property type="resolution" value="1.83 A"/>
    <property type="chains" value="A/B=181-426"/>
</dbReference>
<dbReference type="PDB" id="5LA9">
    <property type="method" value="X-ray"/>
    <property type="resolution" value="2.81 A"/>
    <property type="chains" value="A/B=181-426"/>
</dbReference>
<dbReference type="PDB" id="5LAS">
    <property type="method" value="X-ray"/>
    <property type="resolution" value="2.10 A"/>
    <property type="chains" value="A/B=181-426"/>
</dbReference>
<dbReference type="PDB" id="5LAT">
    <property type="method" value="X-ray"/>
    <property type="resolution" value="1.90 A"/>
    <property type="chains" value="A=181-426"/>
</dbReference>
<dbReference type="PDB" id="5LB6">
    <property type="method" value="X-ray"/>
    <property type="resolution" value="1.70 A"/>
    <property type="chains" value="A=181-426"/>
</dbReference>
<dbReference type="PDB" id="5LBB">
    <property type="method" value="X-ray"/>
    <property type="resolution" value="1.70 A"/>
    <property type="chains" value="A=181-426"/>
</dbReference>
<dbReference type="PDB" id="5LBC">
    <property type="method" value="X-ray"/>
    <property type="resolution" value="1.82 A"/>
    <property type="chains" value="A=181-426"/>
</dbReference>
<dbReference type="PDB" id="5LBE">
    <property type="method" value="X-ray"/>
    <property type="resolution" value="1.75 A"/>
    <property type="chains" value="A=181-426"/>
</dbReference>
<dbReference type="PDB" id="5LBF">
    <property type="method" value="X-ray"/>
    <property type="resolution" value="1.90 A"/>
    <property type="chains" value="A=181-426"/>
</dbReference>
<dbReference type="PDB" id="5OX5">
    <property type="method" value="X-ray"/>
    <property type="resolution" value="2.25 A"/>
    <property type="chains" value="A=181-426"/>
</dbReference>
<dbReference type="PDB" id="5OX6">
    <property type="method" value="X-ray"/>
    <property type="resolution" value="1.99 A"/>
    <property type="chains" value="A=181-426"/>
</dbReference>
<dbReference type="PDB" id="5V18">
    <property type="method" value="X-ray"/>
    <property type="resolution" value="2.15 A"/>
    <property type="chains" value="A=181-416"/>
</dbReference>
<dbReference type="PDB" id="6NMQ">
    <property type="method" value="X-ray"/>
    <property type="resolution" value="1.58 A"/>
    <property type="chains" value="A=180-392"/>
</dbReference>
<dbReference type="PDB" id="6QGV">
    <property type="method" value="X-ray"/>
    <property type="resolution" value="1.40 A"/>
    <property type="chains" value="A=181-407"/>
</dbReference>
<dbReference type="PDB" id="6ST3">
    <property type="method" value="X-ray"/>
    <property type="resolution" value="2.43 A"/>
    <property type="chains" value="A/B=181-407"/>
</dbReference>
<dbReference type="PDB" id="6YVT">
    <property type="method" value="X-ray"/>
    <property type="resolution" value="2.85 A"/>
    <property type="chains" value="A/B/C/D/E/F=181-426"/>
</dbReference>
<dbReference type="PDB" id="6YVW">
    <property type="method" value="X-ray"/>
    <property type="resolution" value="1.97 A"/>
    <property type="chains" value="A=181-426"/>
</dbReference>
<dbReference type="PDB" id="6YVX">
    <property type="method" value="X-ray"/>
    <property type="resolution" value="1.80 A"/>
    <property type="chains" value="A=181-426"/>
</dbReference>
<dbReference type="PDB" id="6YVZ">
    <property type="method" value="X-ray"/>
    <property type="resolution" value="1.91 A"/>
    <property type="chains" value="A=181-426"/>
</dbReference>
<dbReference type="PDB" id="6YW0">
    <property type="method" value="X-ray"/>
    <property type="resolution" value="2.20 A"/>
    <property type="chains" value="A=181-426"/>
</dbReference>
<dbReference type="PDB" id="6YW1">
    <property type="method" value="X-ray"/>
    <property type="resolution" value="1.46 A"/>
    <property type="chains" value="A=181-407"/>
</dbReference>
<dbReference type="PDB" id="6YW2">
    <property type="method" value="X-ray"/>
    <property type="resolution" value="2.14 A"/>
    <property type="chains" value="A=181-407"/>
</dbReference>
<dbReference type="PDB" id="6YW3">
    <property type="method" value="X-ray"/>
    <property type="resolution" value="2.28 A"/>
    <property type="chains" value="A=181-407"/>
</dbReference>
<dbReference type="PDB" id="6YW4">
    <property type="method" value="X-ray"/>
    <property type="resolution" value="1.53 A"/>
    <property type="chains" value="A=181-407"/>
</dbReference>
<dbReference type="PDB" id="6ZBN">
    <property type="method" value="X-ray"/>
    <property type="resolution" value="2.01 A"/>
    <property type="chains" value="A/B/C/D/E/F=181-407"/>
</dbReference>
<dbReference type="PDB" id="6ZBO">
    <property type="method" value="X-ray"/>
    <property type="resolution" value="1.79 A"/>
    <property type="chains" value="A/B/C/D/E/F=181-407"/>
</dbReference>
<dbReference type="PDB" id="7Q5V">
    <property type="method" value="X-ray"/>
    <property type="resolution" value="1.17 A"/>
    <property type="chains" value="A=181-407"/>
</dbReference>
<dbReference type="PDB" id="7Q5X">
    <property type="method" value="X-ray"/>
    <property type="resolution" value="1.21 A"/>
    <property type="chains" value="A=181-407"/>
</dbReference>
<dbReference type="PDB" id="7UJV">
    <property type="method" value="X-ray"/>
    <property type="resolution" value="1.80 A"/>
    <property type="chains" value="B=181-426"/>
</dbReference>
<dbReference type="PDB" id="7UMP">
    <property type="method" value="X-ray"/>
    <property type="resolution" value="1.80 A"/>
    <property type="chains" value="A=188-403"/>
</dbReference>
<dbReference type="PDB" id="8J1K">
    <property type="method" value="X-ray"/>
    <property type="resolution" value="2.45 A"/>
    <property type="chains" value="A=189-406"/>
</dbReference>
<dbReference type="PDB" id="8Q5S">
    <property type="method" value="X-ray"/>
    <property type="resolution" value="1.49 A"/>
    <property type="chains" value="A=181-407"/>
</dbReference>
<dbReference type="PDB" id="8Q64">
    <property type="method" value="X-ray"/>
    <property type="resolution" value="1.36 A"/>
    <property type="chains" value="A=181-407"/>
</dbReference>
<dbReference type="PDB" id="8Q6D">
    <property type="method" value="X-ray"/>
    <property type="resolution" value="1.40 A"/>
    <property type="chains" value="A=181-407"/>
</dbReference>
<dbReference type="PDB" id="8Q6E">
    <property type="method" value="X-ray"/>
    <property type="resolution" value="1.37 A"/>
    <property type="chains" value="A=181-407"/>
</dbReference>
<dbReference type="PDB" id="8RUT">
    <property type="method" value="X-ray"/>
    <property type="resolution" value="1.62 A"/>
    <property type="chains" value="A=181-407"/>
</dbReference>
<dbReference type="PDB" id="8RUV">
    <property type="method" value="X-ray"/>
    <property type="resolution" value="1.66 A"/>
    <property type="chains" value="A=181-407"/>
</dbReference>
<dbReference type="PDB" id="8RUZ">
    <property type="method" value="X-ray"/>
    <property type="resolution" value="1.82 A"/>
    <property type="chains" value="A=181-407"/>
</dbReference>
<dbReference type="PDB" id="8RV1">
    <property type="method" value="X-ray"/>
    <property type="resolution" value="1.39 A"/>
    <property type="chains" value="A=181-407"/>
</dbReference>
<dbReference type="PDB" id="8Y0V">
    <property type="method" value="X-ray"/>
    <property type="resolution" value="2.50 A"/>
    <property type="chains" value="A=181-426"/>
</dbReference>
<dbReference type="PDB" id="8Z31">
    <property type="method" value="X-ray"/>
    <property type="resolution" value="1.81 A"/>
    <property type="chains" value="A=188-403"/>
</dbReference>
<dbReference type="PDB" id="8Z32">
    <property type="method" value="X-ray"/>
    <property type="resolution" value="2.50 A"/>
    <property type="chains" value="A/B=188-426"/>
</dbReference>
<dbReference type="PDB" id="8Z33">
    <property type="method" value="X-ray"/>
    <property type="resolution" value="2.60 A"/>
    <property type="chains" value="A/B=188-426"/>
</dbReference>
<dbReference type="PDB" id="8Z35">
    <property type="method" value="X-ray"/>
    <property type="resolution" value="2.00 A"/>
    <property type="chains" value="A=188-403"/>
</dbReference>
<dbReference type="PDBsum" id="2G19"/>
<dbReference type="PDBsum" id="2G1M"/>
<dbReference type="PDBsum" id="2HBT"/>
<dbReference type="PDBsum" id="2HBU"/>
<dbReference type="PDBsum" id="2Y33"/>
<dbReference type="PDBsum" id="2Y34"/>
<dbReference type="PDBsum" id="3HQR"/>
<dbReference type="PDBsum" id="3HQU"/>
<dbReference type="PDBsum" id="3OUH"/>
<dbReference type="PDBsum" id="3OUI"/>
<dbReference type="PDBsum" id="3OUJ"/>
<dbReference type="PDBsum" id="4BQW"/>
<dbReference type="PDBsum" id="4BQX"/>
<dbReference type="PDBsum" id="4BQY"/>
<dbReference type="PDBsum" id="4JZR"/>
<dbReference type="PDBsum" id="4KBZ"/>
<dbReference type="PDBsum" id="4UWD"/>
<dbReference type="PDBsum" id="5A3U"/>
<dbReference type="PDBsum" id="5L9B"/>
<dbReference type="PDBsum" id="5L9R"/>
<dbReference type="PDBsum" id="5L9V"/>
<dbReference type="PDBsum" id="5LA9"/>
<dbReference type="PDBsum" id="5LAS"/>
<dbReference type="PDBsum" id="5LAT"/>
<dbReference type="PDBsum" id="5LB6"/>
<dbReference type="PDBsum" id="5LBB"/>
<dbReference type="PDBsum" id="5LBC"/>
<dbReference type="PDBsum" id="5LBE"/>
<dbReference type="PDBsum" id="5LBF"/>
<dbReference type="PDBsum" id="5OX5"/>
<dbReference type="PDBsum" id="5OX6"/>
<dbReference type="PDBsum" id="5V18"/>
<dbReference type="PDBsum" id="6NMQ"/>
<dbReference type="PDBsum" id="6QGV"/>
<dbReference type="PDBsum" id="6ST3"/>
<dbReference type="PDBsum" id="6YVT"/>
<dbReference type="PDBsum" id="6YVW"/>
<dbReference type="PDBsum" id="6YVX"/>
<dbReference type="PDBsum" id="6YVZ"/>
<dbReference type="PDBsum" id="6YW0"/>
<dbReference type="PDBsum" id="6YW1"/>
<dbReference type="PDBsum" id="6YW2"/>
<dbReference type="PDBsum" id="6YW3"/>
<dbReference type="PDBsum" id="6YW4"/>
<dbReference type="PDBsum" id="6ZBN"/>
<dbReference type="PDBsum" id="6ZBO"/>
<dbReference type="PDBsum" id="7Q5V"/>
<dbReference type="PDBsum" id="7Q5X"/>
<dbReference type="PDBsum" id="7UJV"/>
<dbReference type="PDBsum" id="7UMP"/>
<dbReference type="PDBsum" id="8J1K"/>
<dbReference type="PDBsum" id="8Q5S"/>
<dbReference type="PDBsum" id="8Q64"/>
<dbReference type="PDBsum" id="8Q6D"/>
<dbReference type="PDBsum" id="8Q6E"/>
<dbReference type="PDBsum" id="8RUT"/>
<dbReference type="PDBsum" id="8RUV"/>
<dbReference type="PDBsum" id="8RUZ"/>
<dbReference type="PDBsum" id="8RV1"/>
<dbReference type="PDBsum" id="8Y0V"/>
<dbReference type="PDBsum" id="8Z31"/>
<dbReference type="PDBsum" id="8Z32"/>
<dbReference type="PDBsum" id="8Z33"/>
<dbReference type="PDBsum" id="8Z35"/>
<dbReference type="SMR" id="Q9GZT9"/>
<dbReference type="BioGRID" id="120060">
    <property type="interactions" value="93"/>
</dbReference>
<dbReference type="CORUM" id="Q9GZT9"/>
<dbReference type="DIP" id="DIP-37495N"/>
<dbReference type="ELM" id="Q9GZT9"/>
<dbReference type="FunCoup" id="Q9GZT9">
    <property type="interactions" value="2680"/>
</dbReference>
<dbReference type="IntAct" id="Q9GZT9">
    <property type="interactions" value="35"/>
</dbReference>
<dbReference type="MINT" id="Q9GZT9"/>
<dbReference type="STRING" id="9606.ENSP00000355601"/>
<dbReference type="BindingDB" id="Q9GZT9"/>
<dbReference type="ChEMBL" id="CHEMBL5697"/>
<dbReference type="DrugBank" id="DB00126">
    <property type="generic name" value="Ascorbic acid"/>
</dbReference>
<dbReference type="DrugBank" id="DB11682">
    <property type="generic name" value="Daprodustat"/>
</dbReference>
<dbReference type="DrugBank" id="DB14490">
    <property type="generic name" value="Ferrous ascorbate"/>
</dbReference>
<dbReference type="DrugBank" id="DB14491">
    <property type="generic name" value="Ferrous fumarate"/>
</dbReference>
<dbReference type="DrugBank" id="DB14488">
    <property type="generic name" value="Ferrous gluconate"/>
</dbReference>
<dbReference type="DrugBank" id="DB14501">
    <property type="generic name" value="Ferrous glycine sulfate"/>
</dbReference>
<dbReference type="DrugBank" id="DB14489">
    <property type="generic name" value="Ferrous succinate"/>
</dbReference>
<dbReference type="DrugBank" id="DB08687">
    <property type="generic name" value="FG-2216"/>
</dbReference>
<dbReference type="DrugBank" id="DB01592">
    <property type="generic name" value="Iron"/>
</dbReference>
<dbReference type="DrugBank" id="DB07112">
    <property type="generic name" value="N-[(4-HYDROXY-8-IODOISOQUINOLIN-3-YL)CARBONYL]GLYCINE"/>
</dbReference>
<dbReference type="DrugBank" id="DB04847">
    <property type="generic name" value="Roxadustat"/>
</dbReference>
<dbReference type="DrugBank" id="DB12255">
    <property type="generic name" value="Vadadustat"/>
</dbReference>
<dbReference type="DrugCentral" id="Q9GZT9"/>
<dbReference type="GuidetoPHARMACOLOGY" id="2833"/>
<dbReference type="GlyGen" id="Q9GZT9">
    <property type="glycosylation" value="1 site, 1 O-linked glycan (1 site)"/>
</dbReference>
<dbReference type="iPTMnet" id="Q9GZT9"/>
<dbReference type="PhosphoSitePlus" id="Q9GZT9"/>
<dbReference type="SwissPalm" id="Q9GZT9"/>
<dbReference type="BioMuta" id="EGLN1"/>
<dbReference type="DMDM" id="32129514"/>
<dbReference type="jPOST" id="Q9GZT9"/>
<dbReference type="MassIVE" id="Q9GZT9"/>
<dbReference type="PaxDb" id="9606-ENSP00000355601"/>
<dbReference type="PeptideAtlas" id="Q9GZT9"/>
<dbReference type="ProteomicsDB" id="80138">
    <molecule id="Q9GZT9-1"/>
</dbReference>
<dbReference type="ProteomicsDB" id="80139">
    <molecule id="Q9GZT9-2"/>
</dbReference>
<dbReference type="ProteomicsDB" id="80140">
    <molecule id="Q9GZT9-3"/>
</dbReference>
<dbReference type="Pumba" id="Q9GZT9"/>
<dbReference type="Antibodypedia" id="20799">
    <property type="antibodies" value="654 antibodies from 37 providers"/>
</dbReference>
<dbReference type="DNASU" id="54583"/>
<dbReference type="Ensembl" id="ENST00000366641.4">
    <molecule id="Q9GZT9-1"/>
    <property type="protein sequence ID" value="ENSP00000355601.3"/>
    <property type="gene ID" value="ENSG00000135766.9"/>
</dbReference>
<dbReference type="GeneID" id="54583"/>
<dbReference type="KEGG" id="hsa:54583"/>
<dbReference type="MANE-Select" id="ENST00000366641.4">
    <property type="protein sequence ID" value="ENSP00000355601.3"/>
    <property type="RefSeq nucleotide sequence ID" value="NM_022051.3"/>
    <property type="RefSeq protein sequence ID" value="NP_071334.1"/>
</dbReference>
<dbReference type="AGR" id="HGNC:1232"/>
<dbReference type="CTD" id="54583"/>
<dbReference type="DisGeNET" id="54583"/>
<dbReference type="GeneCards" id="EGLN1"/>
<dbReference type="HGNC" id="HGNC:1232">
    <property type="gene designation" value="EGLN1"/>
</dbReference>
<dbReference type="HPA" id="ENSG00000135766">
    <property type="expression patterns" value="Tissue enhanced (skeletal)"/>
</dbReference>
<dbReference type="MalaCards" id="EGLN1"/>
<dbReference type="MIM" id="606425">
    <property type="type" value="gene"/>
</dbReference>
<dbReference type="MIM" id="609820">
    <property type="type" value="phenotype"/>
</dbReference>
<dbReference type="neXtProt" id="NX_Q9GZT9"/>
<dbReference type="OpenTargets" id="ENSG00000135766"/>
<dbReference type="Orphanet" id="247511">
    <property type="disease" value="Autosomal dominant secondary polycythemia"/>
</dbReference>
<dbReference type="PharmGKB" id="PA27670"/>
<dbReference type="VEuPathDB" id="HostDB:ENSG00000135766"/>
<dbReference type="eggNOG" id="KOG3710">
    <property type="taxonomic scope" value="Eukaryota"/>
</dbReference>
<dbReference type="GeneTree" id="ENSGT00940000155704"/>
<dbReference type="HOGENOM" id="CLU_022206_2_2_1"/>
<dbReference type="InParanoid" id="Q9GZT9"/>
<dbReference type="OMA" id="DEKANLY"/>
<dbReference type="OrthoDB" id="76265at2759"/>
<dbReference type="PAN-GO" id="Q9GZT9">
    <property type="GO annotations" value="6 GO annotations based on evolutionary models"/>
</dbReference>
<dbReference type="PhylomeDB" id="Q9GZT9"/>
<dbReference type="TreeFam" id="TF314595"/>
<dbReference type="BRENDA" id="1.14.11.2">
    <property type="organism ID" value="2681"/>
</dbReference>
<dbReference type="BRENDA" id="1.14.11.29">
    <property type="organism ID" value="2681"/>
</dbReference>
<dbReference type="PathwayCommons" id="Q9GZT9"/>
<dbReference type="Reactome" id="R-HSA-1234176">
    <property type="pathway name" value="Oxygen-dependent proline hydroxylation of Hypoxia-inducible Factor Alpha"/>
</dbReference>
<dbReference type="SABIO-RK" id="Q9GZT9"/>
<dbReference type="SignaLink" id="Q9GZT9"/>
<dbReference type="SIGNOR" id="Q9GZT9"/>
<dbReference type="BioGRID-ORCS" id="54583">
    <property type="hits" value="108 hits in 1173 CRISPR screens"/>
</dbReference>
<dbReference type="ChiTaRS" id="EGLN1">
    <property type="organism name" value="human"/>
</dbReference>
<dbReference type="EvolutionaryTrace" id="Q9GZT9"/>
<dbReference type="GeneWiki" id="EGLN1"/>
<dbReference type="GenomeRNAi" id="54583"/>
<dbReference type="Pharos" id="Q9GZT9">
    <property type="development level" value="Tclin"/>
</dbReference>
<dbReference type="PRO" id="PR:Q9GZT9"/>
<dbReference type="Proteomes" id="UP000005640">
    <property type="component" value="Chromosome 1"/>
</dbReference>
<dbReference type="RNAct" id="Q9GZT9">
    <property type="molecule type" value="protein"/>
</dbReference>
<dbReference type="Bgee" id="ENSG00000135766">
    <property type="expression patterns" value="Expressed in gastrocnemius and 147 other cell types or tissues"/>
</dbReference>
<dbReference type="ExpressionAtlas" id="Q9GZT9">
    <property type="expression patterns" value="baseline and differential"/>
</dbReference>
<dbReference type="GO" id="GO:0005737">
    <property type="term" value="C:cytoplasm"/>
    <property type="evidence" value="ECO:0000314"/>
    <property type="project" value="UniProtKB"/>
</dbReference>
<dbReference type="GO" id="GO:0005829">
    <property type="term" value="C:cytosol"/>
    <property type="evidence" value="ECO:0000314"/>
    <property type="project" value="HPA"/>
</dbReference>
<dbReference type="GO" id="GO:0098978">
    <property type="term" value="C:glutamatergic synapse"/>
    <property type="evidence" value="ECO:0007669"/>
    <property type="project" value="Ensembl"/>
</dbReference>
<dbReference type="GO" id="GO:0043231">
    <property type="term" value="C:intracellular membrane-bounded organelle"/>
    <property type="evidence" value="ECO:0000314"/>
    <property type="project" value="HPA"/>
</dbReference>
<dbReference type="GO" id="GO:0005634">
    <property type="term" value="C:nucleus"/>
    <property type="evidence" value="ECO:0000318"/>
    <property type="project" value="GO_Central"/>
</dbReference>
<dbReference type="GO" id="GO:0014069">
    <property type="term" value="C:postsynaptic density"/>
    <property type="evidence" value="ECO:0007669"/>
    <property type="project" value="Ensembl"/>
</dbReference>
<dbReference type="GO" id="GO:0016706">
    <property type="term" value="F:2-oxoglutarate-dependent dioxygenase activity"/>
    <property type="evidence" value="ECO:0000314"/>
    <property type="project" value="MGI"/>
</dbReference>
<dbReference type="GO" id="GO:0019899">
    <property type="term" value="F:enzyme binding"/>
    <property type="evidence" value="ECO:0000250"/>
    <property type="project" value="BHF-UCL"/>
</dbReference>
<dbReference type="GO" id="GO:0004857">
    <property type="term" value="F:enzyme inhibitor activity"/>
    <property type="evidence" value="ECO:0000250"/>
    <property type="project" value="BHF-UCL"/>
</dbReference>
<dbReference type="GO" id="GO:0008198">
    <property type="term" value="F:ferrous iron binding"/>
    <property type="evidence" value="ECO:0000314"/>
    <property type="project" value="UniProtKB"/>
</dbReference>
<dbReference type="GO" id="GO:0160082">
    <property type="term" value="F:hypoxia-inducible factor-proline dioxygenase activity"/>
    <property type="evidence" value="ECO:0000314"/>
    <property type="project" value="FlyBase"/>
</dbReference>
<dbReference type="GO" id="GO:0031418">
    <property type="term" value="F:L-ascorbic acid binding"/>
    <property type="evidence" value="ECO:0007669"/>
    <property type="project" value="UniProtKB-KW"/>
</dbReference>
<dbReference type="GO" id="GO:0031545">
    <property type="term" value="F:peptidyl-proline 4-dioxygenase activity"/>
    <property type="evidence" value="ECO:0000318"/>
    <property type="project" value="GO_Central"/>
</dbReference>
<dbReference type="GO" id="GO:0031543">
    <property type="term" value="F:peptidyl-proline dioxygenase activity"/>
    <property type="evidence" value="ECO:0000304"/>
    <property type="project" value="HGNC-UCL"/>
</dbReference>
<dbReference type="GO" id="GO:0008270">
    <property type="term" value="F:zinc ion binding"/>
    <property type="evidence" value="ECO:0007669"/>
    <property type="project" value="UniProtKB-KW"/>
</dbReference>
<dbReference type="GO" id="GO:0055008">
    <property type="term" value="P:cardiac muscle tissue morphogenesis"/>
    <property type="evidence" value="ECO:0007669"/>
    <property type="project" value="Ensembl"/>
</dbReference>
<dbReference type="GO" id="GO:0071456">
    <property type="term" value="P:cellular response to hypoxia"/>
    <property type="evidence" value="ECO:0000318"/>
    <property type="project" value="GO_Central"/>
</dbReference>
<dbReference type="GO" id="GO:0060347">
    <property type="term" value="P:heart trabecula formation"/>
    <property type="evidence" value="ECO:0007669"/>
    <property type="project" value="Ensembl"/>
</dbReference>
<dbReference type="GO" id="GO:0006879">
    <property type="term" value="P:intracellular iron ion homeostasis"/>
    <property type="evidence" value="ECO:0007669"/>
    <property type="project" value="Ensembl"/>
</dbReference>
<dbReference type="GO" id="GO:0032364">
    <property type="term" value="P:intracellular oxygen homeostasis"/>
    <property type="evidence" value="ECO:0000314"/>
    <property type="project" value="HGNC-UCL"/>
</dbReference>
<dbReference type="GO" id="GO:0060711">
    <property type="term" value="P:labyrinthine layer development"/>
    <property type="evidence" value="ECO:0007669"/>
    <property type="project" value="Ensembl"/>
</dbReference>
<dbReference type="GO" id="GO:1902072">
    <property type="term" value="P:negative regulation of hypoxia-inducible factor-1alpha signaling pathway"/>
    <property type="evidence" value="ECO:0000314"/>
    <property type="project" value="HGNC-UCL"/>
</dbReference>
<dbReference type="GO" id="GO:0045944">
    <property type="term" value="P:positive regulation of transcription by RNA polymerase II"/>
    <property type="evidence" value="ECO:0007669"/>
    <property type="project" value="Ensembl"/>
</dbReference>
<dbReference type="GO" id="GO:0045765">
    <property type="term" value="P:regulation of angiogenesis"/>
    <property type="evidence" value="ECO:0000250"/>
    <property type="project" value="UniProtKB"/>
</dbReference>
<dbReference type="GO" id="GO:0099159">
    <property type="term" value="P:regulation of modification of postsynaptic structure"/>
    <property type="evidence" value="ECO:0007669"/>
    <property type="project" value="Ensembl"/>
</dbReference>
<dbReference type="GO" id="GO:0043523">
    <property type="term" value="P:regulation of neuron apoptotic process"/>
    <property type="evidence" value="ECO:0000318"/>
    <property type="project" value="GO_Central"/>
</dbReference>
<dbReference type="GO" id="GO:0140252">
    <property type="term" value="P:regulation protein catabolic process at postsynapse"/>
    <property type="evidence" value="ECO:0007669"/>
    <property type="project" value="Ensembl"/>
</dbReference>
<dbReference type="GO" id="GO:0001666">
    <property type="term" value="P:response to hypoxia"/>
    <property type="evidence" value="ECO:0000314"/>
    <property type="project" value="HGNC-UCL"/>
</dbReference>
<dbReference type="GO" id="GO:0071731">
    <property type="term" value="P:response to nitric oxide"/>
    <property type="evidence" value="ECO:0000314"/>
    <property type="project" value="UniProtKB"/>
</dbReference>
<dbReference type="GO" id="GO:0060412">
    <property type="term" value="P:ventricular septum morphogenesis"/>
    <property type="evidence" value="ECO:0007669"/>
    <property type="project" value="Ensembl"/>
</dbReference>
<dbReference type="FunFam" id="2.60.120.620:FF:000005">
    <property type="entry name" value="Egl nine homolog 1"/>
    <property type="match status" value="1"/>
</dbReference>
<dbReference type="FunFam" id="6.10.140.2220:FF:000015">
    <property type="entry name" value="egl nine homolog 1 isoform X1"/>
    <property type="match status" value="1"/>
</dbReference>
<dbReference type="Gene3D" id="6.10.140.2220">
    <property type="match status" value="1"/>
</dbReference>
<dbReference type="Gene3D" id="2.60.120.620">
    <property type="entry name" value="q2cbj1_9rhob like domain"/>
    <property type="match status" value="1"/>
</dbReference>
<dbReference type="IDEAL" id="IID00345"/>
<dbReference type="InterPro" id="IPR051559">
    <property type="entry name" value="HIF_prolyl_hydroxylases"/>
</dbReference>
<dbReference type="InterPro" id="IPR005123">
    <property type="entry name" value="Oxoglu/Fe-dep_dioxygenase_dom"/>
</dbReference>
<dbReference type="InterPro" id="IPR006620">
    <property type="entry name" value="Pro_4_hyd_alph"/>
</dbReference>
<dbReference type="InterPro" id="IPR044862">
    <property type="entry name" value="Pro_4_hyd_alph_FE2OG_OXY"/>
</dbReference>
<dbReference type="InterPro" id="IPR002893">
    <property type="entry name" value="Znf_MYND"/>
</dbReference>
<dbReference type="PANTHER" id="PTHR12907:SF4">
    <property type="entry name" value="EGL NINE HOMOLOG 1"/>
    <property type="match status" value="1"/>
</dbReference>
<dbReference type="PANTHER" id="PTHR12907">
    <property type="entry name" value="EGL NINE HOMOLOG-RELATED"/>
    <property type="match status" value="1"/>
</dbReference>
<dbReference type="Pfam" id="PF13640">
    <property type="entry name" value="2OG-FeII_Oxy_3"/>
    <property type="match status" value="1"/>
</dbReference>
<dbReference type="Pfam" id="PF01753">
    <property type="entry name" value="zf-MYND"/>
    <property type="match status" value="1"/>
</dbReference>
<dbReference type="SMART" id="SM00702">
    <property type="entry name" value="P4Hc"/>
    <property type="match status" value="1"/>
</dbReference>
<dbReference type="SUPFAM" id="SSF144232">
    <property type="entry name" value="HIT/MYND zinc finger-like"/>
    <property type="match status" value="1"/>
</dbReference>
<dbReference type="PROSITE" id="PS51471">
    <property type="entry name" value="FE2OG_OXY"/>
    <property type="match status" value="1"/>
</dbReference>
<dbReference type="PROSITE" id="PS01360">
    <property type="entry name" value="ZF_MYND_1"/>
    <property type="match status" value="1"/>
</dbReference>
<dbReference type="PROSITE" id="PS50865">
    <property type="entry name" value="ZF_MYND_2"/>
    <property type="match status" value="1"/>
</dbReference>
<keyword id="KW-0002">3D-structure</keyword>
<keyword id="KW-0007">Acetylation</keyword>
<keyword id="KW-0025">Alternative splicing</keyword>
<keyword id="KW-0985">Congenital erythrocytosis</keyword>
<keyword id="KW-0963">Cytoplasm</keyword>
<keyword id="KW-0223">Dioxygenase</keyword>
<keyword id="KW-0225">Disease variant</keyword>
<keyword id="KW-0408">Iron</keyword>
<keyword id="KW-0479">Metal-binding</keyword>
<keyword id="KW-0539">Nucleus</keyword>
<keyword id="KW-0560">Oxidoreductase</keyword>
<keyword id="KW-0597">Phosphoprotein</keyword>
<keyword id="KW-1267">Proteomics identification</keyword>
<keyword id="KW-1185">Reference proteome</keyword>
<keyword id="KW-0702">S-nitrosylation</keyword>
<keyword id="KW-0847">Vitamin C</keyword>
<keyword id="KW-0862">Zinc</keyword>
<keyword id="KW-0863">Zinc-finger</keyword>
<evidence type="ECO:0000255" key="1">
    <source>
        <dbReference type="PROSITE-ProRule" id="PRU00134"/>
    </source>
</evidence>
<evidence type="ECO:0000255" key="2">
    <source>
        <dbReference type="PROSITE-ProRule" id="PRU00805"/>
    </source>
</evidence>
<evidence type="ECO:0000256" key="3">
    <source>
        <dbReference type="SAM" id="MobiDB-lite"/>
    </source>
</evidence>
<evidence type="ECO:0000269" key="4">
    <source>
    </source>
</evidence>
<evidence type="ECO:0000269" key="5">
    <source>
    </source>
</evidence>
<evidence type="ECO:0000269" key="6">
    <source>
    </source>
</evidence>
<evidence type="ECO:0000269" key="7">
    <source>
    </source>
</evidence>
<evidence type="ECO:0000269" key="8">
    <source>
    </source>
</evidence>
<evidence type="ECO:0000269" key="9">
    <source>
    </source>
</evidence>
<evidence type="ECO:0000269" key="10">
    <source>
    </source>
</evidence>
<evidence type="ECO:0000269" key="11">
    <source>
    </source>
</evidence>
<evidence type="ECO:0000269" key="12">
    <source>
    </source>
</evidence>
<evidence type="ECO:0000269" key="13">
    <source>
    </source>
</evidence>
<evidence type="ECO:0000269" key="14">
    <source>
    </source>
</evidence>
<evidence type="ECO:0000269" key="15">
    <source>
    </source>
</evidence>
<evidence type="ECO:0000269" key="16">
    <source>
    </source>
</evidence>
<evidence type="ECO:0000269" key="17">
    <source>
    </source>
</evidence>
<evidence type="ECO:0000269" key="18">
    <source>
    </source>
</evidence>
<evidence type="ECO:0000269" key="19">
    <source>
    </source>
</evidence>
<evidence type="ECO:0000269" key="20">
    <source>
    </source>
</evidence>
<evidence type="ECO:0000269" key="21">
    <source>
    </source>
</evidence>
<evidence type="ECO:0000269" key="22">
    <source>
    </source>
</evidence>
<evidence type="ECO:0000269" key="23">
    <source>
    </source>
</evidence>
<evidence type="ECO:0000269" key="24">
    <source>
    </source>
</evidence>
<evidence type="ECO:0000269" key="25">
    <source>
    </source>
</evidence>
<evidence type="ECO:0000269" key="26">
    <source>
    </source>
</evidence>
<evidence type="ECO:0000269" key="27">
    <source>
    </source>
</evidence>
<evidence type="ECO:0000269" key="28">
    <source>
    </source>
</evidence>
<evidence type="ECO:0000269" key="29">
    <source>
    </source>
</evidence>
<evidence type="ECO:0000269" key="30">
    <source>
    </source>
</evidence>
<evidence type="ECO:0000269" key="31">
    <source>
    </source>
</evidence>
<evidence type="ECO:0000303" key="32">
    <source>
    </source>
</evidence>
<evidence type="ECO:0000303" key="33">
    <source ref="6"/>
</evidence>
<evidence type="ECO:0000305" key="34"/>
<evidence type="ECO:0000305" key="35">
    <source>
    </source>
</evidence>
<evidence type="ECO:0000312" key="36">
    <source>
        <dbReference type="HGNC" id="HGNC:1232"/>
    </source>
</evidence>
<evidence type="ECO:0007744" key="37">
    <source>
        <dbReference type="PDB" id="2G19"/>
    </source>
</evidence>
<evidence type="ECO:0007744" key="38">
    <source>
        <dbReference type="PDB" id="2G1M"/>
    </source>
</evidence>
<evidence type="ECO:0007744" key="39">
    <source>
        <dbReference type="PDB" id="2Y33"/>
    </source>
</evidence>
<evidence type="ECO:0007744" key="40">
    <source>
        <dbReference type="PDB" id="2Y34"/>
    </source>
</evidence>
<evidence type="ECO:0007744" key="41">
    <source>
        <dbReference type="PDB" id="3HQR"/>
    </source>
</evidence>
<evidence type="ECO:0007744" key="42">
    <source>
        <dbReference type="PDB" id="3HQU"/>
    </source>
</evidence>
<evidence type="ECO:0007744" key="43">
    <source>
        <dbReference type="PDB" id="5V18"/>
    </source>
</evidence>
<evidence type="ECO:0007744" key="44">
    <source>
    </source>
</evidence>
<evidence type="ECO:0007744" key="45">
    <source>
    </source>
</evidence>
<evidence type="ECO:0007744" key="46">
    <source>
    </source>
</evidence>
<evidence type="ECO:0007744" key="47">
    <source>
    </source>
</evidence>
<evidence type="ECO:0007829" key="48">
    <source>
        <dbReference type="PDB" id="2G1M"/>
    </source>
</evidence>
<evidence type="ECO:0007829" key="49">
    <source>
        <dbReference type="PDB" id="4KBZ"/>
    </source>
</evidence>
<evidence type="ECO:0007829" key="50">
    <source>
        <dbReference type="PDB" id="5V18"/>
    </source>
</evidence>
<evidence type="ECO:0007829" key="51">
    <source>
        <dbReference type="PDB" id="6NMQ"/>
    </source>
</evidence>
<evidence type="ECO:0007829" key="52">
    <source>
        <dbReference type="PDB" id="6ZBN"/>
    </source>
</evidence>
<evidence type="ECO:0007829" key="53">
    <source>
        <dbReference type="PDB" id="7Q5V"/>
    </source>
</evidence>
<evidence type="ECO:0007829" key="54">
    <source>
        <dbReference type="PDB" id="7Q5X"/>
    </source>
</evidence>
<evidence type="ECO:0007829" key="55">
    <source>
        <dbReference type="PDB" id="7UMP"/>
    </source>
</evidence>